<feature type="chain" id="PRO_0000180277" description="Fatty acid synthase">
    <location>
        <begin position="1"/>
        <end position="2504"/>
    </location>
</feature>
<feature type="domain" description="Ketosynthase family 3 (KS3)" evidence="5">
    <location>
        <begin position="1"/>
        <end position="406"/>
    </location>
</feature>
<feature type="domain" description="PKS/mFAS DH" evidence="6">
    <location>
        <begin position="844"/>
        <end position="1104"/>
    </location>
</feature>
<feature type="domain" description="Carrier" evidence="4">
    <location>
        <begin position="2112"/>
        <end position="2192"/>
    </location>
</feature>
<feature type="region of interest" description="Acyl and malonyl transferases">
    <location>
        <begin position="429"/>
        <end position="817"/>
    </location>
</feature>
<feature type="region of interest" description="N-terminal hotdog fold" evidence="6">
    <location>
        <begin position="844"/>
        <end position="967"/>
    </location>
</feature>
<feature type="region of interest" description="C-terminal hotdog fold" evidence="6">
    <location>
        <begin position="982"/>
        <end position="1104"/>
    </location>
</feature>
<feature type="region of interest" description="Enoyl reductase">
    <location>
        <begin position="1628"/>
        <end position="1856"/>
    </location>
</feature>
<feature type="region of interest" description="Beta-ketoacyl reductase">
    <location>
        <begin position="1857"/>
        <end position="2111"/>
    </location>
</feature>
<feature type="region of interest" description="Disordered" evidence="8">
    <location>
        <begin position="2181"/>
        <end position="2205"/>
    </location>
</feature>
<feature type="region of interest" description="Thioesterase">
    <location>
        <begin position="2201"/>
        <end position="2504"/>
    </location>
</feature>
<feature type="compositionally biased region" description="Low complexity" evidence="8">
    <location>
        <begin position="2185"/>
        <end position="2198"/>
    </location>
</feature>
<feature type="active site" description="For beta-ketoacyl synthase activity" evidence="5">
    <location>
        <position position="161"/>
    </location>
</feature>
<feature type="active site" description="For beta-ketoacyl synthase activity" evidence="5">
    <location>
        <position position="293"/>
    </location>
</feature>
<feature type="active site" description="For beta-ketoacyl synthase activity" evidence="5">
    <location>
        <position position="331"/>
    </location>
</feature>
<feature type="active site" description="For malonyltransferase activity" evidence="7">
    <location>
        <position position="581"/>
    </location>
</feature>
<feature type="active site" description="Proton acceptor; for dehydratase activity" evidence="6">
    <location>
        <position position="878"/>
    </location>
</feature>
<feature type="active site" description="Proton donor; for dehydratase activity" evidence="6">
    <location>
        <position position="1032"/>
    </location>
</feature>
<feature type="active site" description="For thioesterase activity" evidence="7">
    <location>
        <position position="2301"/>
    </location>
</feature>
<feature type="active site" description="For thioesterase activity" evidence="7">
    <location>
        <position position="2474"/>
    </location>
</feature>
<feature type="binding site" evidence="11 16">
    <location>
        <begin position="647"/>
        <end position="648"/>
    </location>
    <ligand>
        <name>an acyl-CoA</name>
        <dbReference type="ChEBI" id="CHEBI:58342"/>
    </ligand>
</feature>
<feature type="binding site" evidence="11 16">
    <location>
        <position position="671"/>
    </location>
    <ligand>
        <name>an acyl-CoA</name>
        <dbReference type="ChEBI" id="CHEBI:58342"/>
    </ligand>
</feature>
<feature type="binding site" evidence="11 16">
    <location>
        <position position="773"/>
    </location>
    <ligand>
        <name>an acyl-CoA</name>
        <dbReference type="ChEBI" id="CHEBI:58342"/>
    </ligand>
</feature>
<feature type="binding site" evidence="1">
    <location>
        <begin position="1664"/>
        <end position="1681"/>
    </location>
    <ligand>
        <name>NADP(+)</name>
        <dbReference type="ChEBI" id="CHEBI:58349"/>
        <label>1</label>
        <note>for enoyl reductase activity</note>
    </ligand>
</feature>
<feature type="binding site" evidence="1">
    <location>
        <begin position="1879"/>
        <end position="1894"/>
    </location>
    <ligand>
        <name>NADP(+)</name>
        <dbReference type="ChEBI" id="CHEBI:58349"/>
        <label>2</label>
        <note>for ketoreductase activity</note>
    </ligand>
</feature>
<feature type="modified residue" description="N-acetylmethionine" evidence="12">
    <location>
        <position position="1"/>
    </location>
</feature>
<feature type="modified residue" description="N6-acetyllysine" evidence="18">
    <location>
        <position position="59"/>
    </location>
</feature>
<feature type="modified residue" description="Phosphoserine" evidence="3">
    <location>
        <position position="63"/>
    </location>
</feature>
<feature type="modified residue" description="N6-acetyllysine" evidence="3">
    <location>
        <position position="70"/>
    </location>
</feature>
<feature type="modified residue" description="Phosphoserine" evidence="3">
    <location>
        <position position="207"/>
    </location>
</feature>
<feature type="modified residue" description="N6-acetyllysine" evidence="3">
    <location>
        <position position="298"/>
    </location>
</feature>
<feature type="modified residue" description="N6-acetyllysine" evidence="3">
    <location>
        <position position="528"/>
    </location>
</feature>
<feature type="modified residue" description="N6-acetyllysine" evidence="3">
    <location>
        <position position="673"/>
    </location>
</feature>
<feature type="modified residue" description="Phosphoserine" evidence="17">
    <location>
        <position position="725"/>
    </location>
</feature>
<feature type="modified residue" description="N6-acetyllysine" evidence="18">
    <location>
        <position position="790"/>
    </location>
</feature>
<feature type="modified residue" description="N6-acetyllysine" evidence="18">
    <location>
        <position position="993"/>
    </location>
</feature>
<feature type="modified residue" description="N6-acetyllysine" evidence="18">
    <location>
        <position position="1071"/>
    </location>
</feature>
<feature type="modified residue" description="N6-acetyllysine" evidence="18">
    <location>
        <position position="1276"/>
    </location>
</feature>
<feature type="modified residue" description="S-nitrosocysteine" evidence="3">
    <location>
        <position position="1464"/>
    </location>
</feature>
<feature type="modified residue" description="Phosphoserine" evidence="17">
    <location>
        <position position="1577"/>
    </location>
</feature>
<feature type="modified residue" description="Phosphoserine" evidence="17">
    <location>
        <position position="1587"/>
    </location>
</feature>
<feature type="modified residue" description="N6-(pyridoxal phosphate)lysine; alternate" evidence="1">
    <location>
        <position position="1697"/>
    </location>
</feature>
<feature type="modified residue" description="N6-acetyllysine; alternate" evidence="3">
    <location>
        <position position="1697"/>
    </location>
</feature>
<feature type="modified residue" description="N6-acetyllysine" evidence="3">
    <location>
        <position position="1764"/>
    </location>
</feature>
<feature type="modified residue" description="N6-acetyllysine" evidence="18">
    <location>
        <position position="1840"/>
    </location>
</feature>
<feature type="modified residue" description="N6-acetyllysine" evidence="3">
    <location>
        <position position="1988"/>
    </location>
</feature>
<feature type="modified residue" description="S-nitrosocysteine" evidence="3">
    <location>
        <position position="2084"/>
    </location>
</feature>
<feature type="modified residue" description="O-(pantetheine 4'-phosphoryl)serine; alternate" evidence="4">
    <location>
        <position position="2150"/>
    </location>
</feature>
<feature type="modified residue" description="Phosphoserine; alternate" evidence="2">
    <location>
        <position position="2150"/>
    </location>
</feature>
<feature type="modified residue" description="Phosphoserine" evidence="17">
    <location>
        <position position="2190"/>
    </location>
</feature>
<feature type="modified residue" description="Phosphoserine" evidence="3">
    <location>
        <position position="2229"/>
    </location>
</feature>
<feature type="modified residue" description="N6-acetyllysine" evidence="18">
    <location>
        <position position="2384"/>
    </location>
</feature>
<feature type="cross-link" description="Glycyl lysine isopeptide (Lys-Gly) (interchain with G-Cter in SUMO2)" evidence="3">
    <location>
        <position position="2442"/>
    </location>
</feature>
<feature type="sequence conflict" description="In Ref. 6; CAA31525." evidence="14" ref="6">
    <original>T</original>
    <variation>N</variation>
    <location>
        <position position="1992"/>
    </location>
</feature>
<feature type="sequence conflict" description="In Ref. 6; CAA31525." evidence="14" ref="6">
    <original>G</original>
    <variation>C</variation>
    <location>
        <position position="2028"/>
    </location>
</feature>
<feature type="sequence conflict" description="In Ref. 6; CAA31525." evidence="14" ref="6">
    <original>G</original>
    <variation>V</variation>
    <location>
        <position position="2045"/>
    </location>
</feature>
<feature type="sequence conflict" description="In Ref. 6; CAA31525." evidence="14" ref="6">
    <original>T</original>
    <variation>N</variation>
    <location>
        <position position="2117"/>
    </location>
</feature>
<feature type="sequence conflict" description="In Ref. 6; CAA31525." evidence="14" ref="6">
    <original>Q</original>
    <variation>R</variation>
    <location>
        <position position="2175"/>
    </location>
</feature>
<feature type="sequence conflict" description="In Ref. 6; CAA31525." evidence="14" ref="6">
    <original>Y</original>
    <variation>H</variation>
    <location>
        <position position="2295"/>
    </location>
</feature>
<feature type="strand" evidence="20">
    <location>
        <begin position="4"/>
        <end position="13"/>
    </location>
</feature>
<feature type="strand" evidence="20">
    <location>
        <begin position="16"/>
        <end position="18"/>
    </location>
</feature>
<feature type="helix" evidence="20">
    <location>
        <begin position="19"/>
        <end position="27"/>
    </location>
</feature>
<feature type="strand" evidence="20">
    <location>
        <begin position="36"/>
        <end position="40"/>
    </location>
</feature>
<feature type="helix" evidence="20">
    <location>
        <begin position="44"/>
        <end position="46"/>
    </location>
</feature>
<feature type="helix" evidence="20">
    <location>
        <begin position="62"/>
        <end position="65"/>
    </location>
</feature>
<feature type="helix" evidence="20">
    <location>
        <begin position="69"/>
        <end position="73"/>
    </location>
</feature>
<feature type="helix" evidence="20">
    <location>
        <begin position="77"/>
        <end position="92"/>
    </location>
</feature>
<feature type="helix" evidence="20">
    <location>
        <begin position="97"/>
        <end position="100"/>
    </location>
</feature>
<feature type="strand" evidence="20">
    <location>
        <begin position="106"/>
        <end position="111"/>
    </location>
</feature>
<feature type="helix" evidence="20">
    <location>
        <begin position="115"/>
        <end position="120"/>
    </location>
</feature>
<feature type="turn" evidence="20">
    <location>
        <begin position="124"/>
        <end position="126"/>
    </location>
</feature>
<feature type="helix" evidence="20">
    <location>
        <begin position="130"/>
        <end position="135"/>
    </location>
</feature>
<feature type="helix" evidence="20">
    <location>
        <begin position="139"/>
        <end position="148"/>
    </location>
</feature>
<feature type="strand" evidence="20">
    <location>
        <begin position="154"/>
        <end position="158"/>
    </location>
</feature>
<feature type="helix" evidence="20">
    <location>
        <begin position="160"/>
        <end position="162"/>
    </location>
</feature>
<feature type="helix" evidence="20">
    <location>
        <begin position="163"/>
        <end position="176"/>
    </location>
</feature>
<feature type="strand" evidence="20">
    <location>
        <begin position="181"/>
        <end position="189"/>
    </location>
</feature>
<feature type="helix" evidence="20">
    <location>
        <begin position="194"/>
        <end position="202"/>
    </location>
</feature>
<feature type="strand" evidence="20">
    <location>
        <begin position="227"/>
        <end position="235"/>
    </location>
</feature>
<feature type="helix" evidence="20">
    <location>
        <begin position="236"/>
        <end position="238"/>
    </location>
</feature>
<feature type="strand" evidence="20">
    <location>
        <begin position="243"/>
        <end position="253"/>
    </location>
</feature>
<feature type="helix" evidence="20">
    <location>
        <begin position="266"/>
        <end position="276"/>
    </location>
</feature>
<feature type="helix" evidence="20">
    <location>
        <begin position="278"/>
        <end position="280"/>
    </location>
</feature>
<feature type="helix" evidence="20">
    <location>
        <begin position="284"/>
        <end position="286"/>
    </location>
</feature>
<feature type="strand" evidence="20">
    <location>
        <begin position="287"/>
        <end position="291"/>
    </location>
</feature>
<feature type="helix" evidence="20">
    <location>
        <begin position="300"/>
        <end position="311"/>
    </location>
</feature>
<feature type="helix" evidence="20">
    <location>
        <begin position="313"/>
        <end position="315"/>
    </location>
</feature>
<feature type="strand" evidence="20">
    <location>
        <begin position="320"/>
        <end position="323"/>
    </location>
</feature>
<feature type="helix" evidence="20">
    <location>
        <begin position="326"/>
        <end position="329"/>
    </location>
</feature>
<feature type="helix" evidence="20">
    <location>
        <begin position="333"/>
        <end position="335"/>
    </location>
</feature>
<feature type="helix" evidence="20">
    <location>
        <begin position="336"/>
        <end position="349"/>
    </location>
</feature>
<feature type="helix" evidence="20">
    <location>
        <begin position="367"/>
        <end position="370"/>
    </location>
</feature>
<feature type="strand" evidence="20">
    <location>
        <begin position="373"/>
        <end position="376"/>
    </location>
</feature>
<feature type="strand" evidence="20">
    <location>
        <begin position="387"/>
        <end position="393"/>
    </location>
</feature>
<feature type="strand" evidence="20">
    <location>
        <begin position="397"/>
        <end position="406"/>
    </location>
</feature>
<feature type="helix" evidence="20">
    <location>
        <begin position="416"/>
        <end position="418"/>
    </location>
</feature>
<feature type="strand" evidence="20">
    <location>
        <begin position="422"/>
        <end position="430"/>
    </location>
</feature>
<feature type="helix" evidence="20">
    <location>
        <begin position="431"/>
        <end position="443"/>
    </location>
</feature>
<feature type="turn" evidence="20">
    <location>
        <begin position="444"/>
        <end position="446"/>
    </location>
</feature>
<feature type="helix" evidence="20">
    <location>
        <begin position="448"/>
        <end position="456"/>
    </location>
</feature>
<feature type="turn" evidence="20">
    <location>
        <begin position="462"/>
        <end position="464"/>
    </location>
</feature>
<feature type="strand" evidence="20">
    <location>
        <begin position="467"/>
        <end position="477"/>
    </location>
</feature>
<feature type="strand" evidence="20">
    <location>
        <begin position="480"/>
        <end position="484"/>
    </location>
</feature>
<feature type="strand" evidence="20">
    <location>
        <begin position="492"/>
        <end position="496"/>
    </location>
</feature>
<feature type="turn" evidence="20">
    <location>
        <begin position="504"/>
        <end position="507"/>
    </location>
</feature>
<feature type="helix" evidence="20">
    <location>
        <begin position="509"/>
        <end position="512"/>
    </location>
</feature>
<feature type="helix" evidence="20">
    <location>
        <begin position="514"/>
        <end position="527"/>
    </location>
</feature>
<feature type="turn" evidence="20">
    <location>
        <begin position="528"/>
        <end position="531"/>
    </location>
</feature>
<feature type="helix" evidence="20">
    <location>
        <begin position="534"/>
        <end position="539"/>
    </location>
</feature>
<feature type="helix" evidence="20">
    <location>
        <begin position="545"/>
        <end position="547"/>
    </location>
</feature>
<feature type="helix" evidence="20">
    <location>
        <begin position="549"/>
        <end position="569"/>
    </location>
</feature>
<feature type="strand" evidence="20">
    <location>
        <begin position="575"/>
        <end position="579"/>
    </location>
</feature>
<feature type="helix" evidence="20">
    <location>
        <begin position="583"/>
        <end position="590"/>
    </location>
</feature>
<feature type="helix" evidence="20">
    <location>
        <begin position="596"/>
        <end position="611"/>
    </location>
</feature>
<feature type="turn" evidence="19">
    <location>
        <begin position="612"/>
        <end position="614"/>
    </location>
</feature>
<feature type="strand" evidence="20">
    <location>
        <begin position="618"/>
        <end position="625"/>
    </location>
</feature>
<feature type="helix" evidence="20">
    <location>
        <begin position="627"/>
        <end position="633"/>
    </location>
</feature>
<feature type="strand" evidence="20">
    <location>
        <begin position="639"/>
        <end position="643"/>
    </location>
</feature>
<feature type="strand" evidence="20">
    <location>
        <begin position="645"/>
        <end position="654"/>
    </location>
</feature>
<feature type="helix" evidence="20">
    <location>
        <begin position="655"/>
        <end position="658"/>
    </location>
</feature>
<feature type="helix" evidence="20">
    <location>
        <begin position="660"/>
        <end position="666"/>
    </location>
</feature>
<feature type="turn" evidence="20">
    <location>
        <begin position="667"/>
        <end position="669"/>
    </location>
</feature>
<feature type="strand" evidence="20">
    <location>
        <begin position="672"/>
        <end position="675"/>
    </location>
</feature>
<feature type="helix" evidence="20">
    <location>
        <begin position="685"/>
        <end position="687"/>
    </location>
</feature>
<feature type="turn" evidence="20">
    <location>
        <begin position="688"/>
        <end position="690"/>
    </location>
</feature>
<feature type="helix" evidence="20">
    <location>
        <begin position="691"/>
        <end position="701"/>
    </location>
</feature>
<feature type="strand" evidence="20">
    <location>
        <begin position="702"/>
        <end position="704"/>
    </location>
</feature>
<feature type="strand" evidence="20">
    <location>
        <begin position="715"/>
        <end position="717"/>
    </location>
</feature>
<feature type="helix" evidence="20">
    <location>
        <begin position="719"/>
        <end position="721"/>
    </location>
</feature>
<feature type="strand" evidence="20">
    <location>
        <begin position="722"/>
        <end position="724"/>
    </location>
</feature>
<feature type="helix" evidence="20">
    <location>
        <begin position="725"/>
        <end position="728"/>
    </location>
</feature>
<feature type="helix" evidence="20">
    <location>
        <begin position="732"/>
        <end position="740"/>
    </location>
</feature>
<feature type="helix" evidence="20">
    <location>
        <begin position="745"/>
        <end position="749"/>
    </location>
</feature>
<feature type="strand" evidence="20">
    <location>
        <begin position="757"/>
        <end position="764"/>
    </location>
</feature>
<feature type="helix" evidence="20">
    <location>
        <begin position="768"/>
        <end position="774"/>
    </location>
</feature>
<feature type="strand" evidence="20">
    <location>
        <begin position="779"/>
        <end position="782"/>
    </location>
</feature>
<feature type="helix" evidence="20">
    <location>
        <begin position="792"/>
        <end position="804"/>
    </location>
</feature>
<feature type="turn" evidence="20">
    <location>
        <begin position="805"/>
        <end position="807"/>
    </location>
</feature>
<feature type="helix" evidence="20">
    <location>
        <begin position="812"/>
        <end position="815"/>
    </location>
</feature>
<feature type="helix" evidence="20">
    <location>
        <begin position="831"/>
        <end position="833"/>
    </location>
</feature>
<feature type="helix" evidence="20">
    <location>
        <begin position="847"/>
        <end position="849"/>
    </location>
</feature>
<name>FAS_MOUSE</name>
<evidence type="ECO:0000250" key="1"/>
<evidence type="ECO:0000250" key="2">
    <source>
        <dbReference type="UniProtKB" id="P12785"/>
    </source>
</evidence>
<evidence type="ECO:0000250" key="3">
    <source>
        <dbReference type="UniProtKB" id="P49327"/>
    </source>
</evidence>
<evidence type="ECO:0000255" key="4">
    <source>
        <dbReference type="PROSITE-ProRule" id="PRU00258"/>
    </source>
</evidence>
<evidence type="ECO:0000255" key="5">
    <source>
        <dbReference type="PROSITE-ProRule" id="PRU01348"/>
    </source>
</evidence>
<evidence type="ECO:0000255" key="6">
    <source>
        <dbReference type="PROSITE-ProRule" id="PRU01363"/>
    </source>
</evidence>
<evidence type="ECO:0000255" key="7">
    <source>
        <dbReference type="PROSITE-ProRule" id="PRU10022"/>
    </source>
</evidence>
<evidence type="ECO:0000256" key="8">
    <source>
        <dbReference type="SAM" id="MobiDB-lite"/>
    </source>
</evidence>
<evidence type="ECO:0000269" key="9">
    <source>
    </source>
</evidence>
<evidence type="ECO:0000269" key="10">
    <source>
    </source>
</evidence>
<evidence type="ECO:0000269" key="11">
    <source>
    </source>
</evidence>
<evidence type="ECO:0000269" key="12">
    <source ref="4"/>
</evidence>
<evidence type="ECO:0000303" key="13">
    <source>
    </source>
</evidence>
<evidence type="ECO:0000305" key="14"/>
<evidence type="ECO:0000305" key="15">
    <source>
    </source>
</evidence>
<evidence type="ECO:0007744" key="16">
    <source>
        <dbReference type="PDB" id="6ROP"/>
    </source>
</evidence>
<evidence type="ECO:0007744" key="17">
    <source>
    </source>
</evidence>
<evidence type="ECO:0007744" key="18">
    <source>
    </source>
</evidence>
<evidence type="ECO:0007829" key="19">
    <source>
        <dbReference type="PDB" id="5MY0"/>
    </source>
</evidence>
<evidence type="ECO:0007829" key="20">
    <source>
        <dbReference type="PDB" id="5MY2"/>
    </source>
</evidence>
<proteinExistence type="evidence at protein level"/>
<sequence>MEEVVIAGMSGKLPESENLQEFWANLIGGVDMVTDDDRRWKAGLYGLPKRSGKLKDLSKFDASFFGVHPKQAHTMDPQLRLLLEVSYEAIVDGGINPASLRGTNTGVWVGVSGSEASEALSRDPETLLGYSMVGCQRAMMANRLSFFFDFKGPSIALDTACSSSLLALQNAYQAIRSGECPAALVGGINLLLKPNTSVQFMKLGMLSPDGTCRSFDDSGSGYCRSEAVVAVLLTKKSLARRVYATILNAGTNTDGSKEQGVTFPSGEVQEQLICSLYQPAGLAPESLEYIEAHGTGTKVGDPQELNGITRSLCAFRQAPLLIGSTKSNMGHPEPASGLAALTKVLLSLEHGVWAPNLHFHNPNPEIPALLDGRLQVVDRPLPVRGGNVGINSFGFGGSNVHVILQPNTRQAPAPTAHAALPHLLHASGRTLEAVQDLLEQGRQHSQDLAFVSMLNDIAATPTAAMPFRGYTVLGVEGRVQEVQQVSTNKRPLWFICSGMGTQWRGMGLSLMRLDSFRESILRSDEAVKPLGVKVSDLLLSTDERTFDDIVHAFVSLTAIQIALIDLLTSVGLKPDGIIGHSLGEVACGYADGCLSQREAVLAAYWRGQCIKDAHLPPGSMAAVGLSWEECKQRCPAGVVPACHNSEDTVTISGPQAAVNEFVEQLKQEGVFAKEVRTGGLAFHSYFMEGIAPTLLQALKKVIREPRPRSARWLSTSIPEAQWQSSLARTSSAEYNVNNLVSPVLFQEALWHIPEHAVVLEIAPHALLQAVLKRGVKSSCTIIPLMKRDHKDNLEFFLTNLGKVHLTGINVNPNALFPPVEFPAPRGTPLISPHIKWDHSQTWDVPVAEDFPNGSSSSSATVYSIDASPESPDHYLVDHCIDGRVIFPGTGYLCLVWKTLARSLGLSLEETPVVFENVSFHQATILPKTGTVALEVRLLEASHAFEVSDTGNLIVSGKVYLWEDPNSKLFDHPEVPTPPESASVSRLTQGEVYKELRLRGYDYGPQFQGICEATLEGEQGKLLWKDNWVTFMDTMLQVSILGSSQQSLQLPTRVTAIYIDPATHRQKVYRLKEDTQVADVTTSRCLGITVSGGIHISRLQTTATSRRQQEQLVPTLEKFVFTPHMEAECLSESTALQKELQLCKGLARALQTKATQQGLKAAMLGQEDPPQHGLPRLLAAACQLQLNGNLQLELGEALAQERLLLPEDPLISGLLNSQALKACVDTALENLSTLKMKVAEVLAGEGHLYSRIPALLNTQPMLQLEYTATDRHPQALKDVQTKLQQHDVAQGQWNPSDPAPSSLGALDLLVCNCALATLGDPALALDNMVAALKEGGFLLVHTVLKGHALGETLACLPSEVQPAPSLLSQEEWESLFSRKALHLVGLKRSFYGTALFLCRRAIPQEKPIFLSVEDTSFQWVDSLKSTLATSSSQPVWLTAMDCPTSGVVGLVNCLRKEPGGHRIRCILLSNLSNTSHAPKLDPGSPELQQVLKHDLVMNVYRDGAWGAFRHFQLEQDKPKEQTAHAFVNVLTRGDLASIRWVSSPLKHTQPSSSGAQLCTVYYASLNFRDIMLATGKLSPDAIPGKWASRDCMLGMEFSGRDRCGRRVMGLVPAEGLATSVLLSSDFLWDVPSSWTLEEAASVPVVYTTAYYSLVVRGRIQRGETVLIHSGSGGVGQAAISIALSLGCRVFTTVGSAEKRAYLQARFPQLDDTSFANSRDTSFEQHVLLHTGGKGVDLVLNSLAEEKLQASVRCLAQHGRFLEIGKFDLSNNHPLGMAIFLKNVTFHGILLDALFEEANDSWREVAALLKAGIRDGVVKPLKCTVFPKAQVEDAFRYMAQGKHIGKVLVQVREEEPEAVLPGAQPTLISAISKTFCPAHKSYIITGGLGGFGLELARWLVLRGAQRLVLTSRSGIRTGYQAKHIREWRRQGIQVLVSTSNVSSLEGARALIAEATKLGPVGGVFNLAMVLRDAMLENQTPELFQDVNKPKYNGTLNLDRATREACPELDYFVAFSSVSCGRGNAGQTNYGFANSTMERICEQRRHDGLPGLAVQWGAIGDVGIVLEAMGTNDTVIGGTLPQRISSCMEVLDLFLNQPHAVLSSFVLAEKKAVAHGDGDTQRDLVKAVAHILGIRDLAGINLDSTLADLGLDSLMGVEVRQILEREHDLVLPMREVRQLTLRKLQEMSSKTDSATDTTAPKSRSDTSLKQNQLNLSTLLVNPEGPTLTQLNSVQSSERPLFLVHPIEGSTTVFHSLAAKLSVPTYGLQCTQAAPLDSIPNLAAYYIDCIKQVQPEGPYRIAGYSFGACVAFEMCSQLQAQQGPAPTHNNLFLFDGSHTYVLAYTQSYRAKMTPGCEAEAEAEALCFFIKQFLDVEHSKVLEALLPLKSLEDRVAASVDLITKSHHSLDRRELSFAAVSFYHKLRAADQYKPKAKYHGNVTLLRAKTGGTYGEDLGADYNLSQVCDGKVSVHIIEGDHRTLLEGSGLESIINIIHSSLAEPRVSVREG</sequence>
<gene>
    <name type="primary">Fasn</name>
</gene>
<comment type="function">
    <text evidence="10 11">Fatty acid synthetase is a multifunctional enzyme that catalyzes the de novo biosynthesis of long-chain saturated fatty acids starting from acetyl-CoA and malonyl-CoA in the presence of NADPH. This multifunctional protein contains 7 catalytic activities and a site for the binding of the prosthetic group 4'-phosphopantetheine of the acyl carrier protein ([ACP]) domain.</text>
</comment>
<comment type="catalytic activity">
    <reaction evidence="10">
        <text>acetyl-CoA + n malonyl-CoA + 2n NADPH + 2n H(+) = a long-chain fatty acid + (n+1) CoA + n CO2 + 2n NADP(+).</text>
        <dbReference type="EC" id="2.3.1.85"/>
    </reaction>
</comment>
<comment type="catalytic activity">
    <reaction evidence="10">
        <text>holo-[ACP] + acetyl-CoA = acetyl-[ACP] + CoA</text>
        <dbReference type="Rhea" id="RHEA:41788"/>
        <dbReference type="Rhea" id="RHEA-COMP:9621"/>
        <dbReference type="Rhea" id="RHEA-COMP:9685"/>
        <dbReference type="ChEBI" id="CHEBI:57287"/>
        <dbReference type="ChEBI" id="CHEBI:57288"/>
        <dbReference type="ChEBI" id="CHEBI:64479"/>
        <dbReference type="ChEBI" id="CHEBI:78446"/>
        <dbReference type="EC" id="2.3.1.38"/>
    </reaction>
    <physiologicalReaction direction="left-to-right" evidence="10">
        <dbReference type="Rhea" id="RHEA:41789"/>
    </physiologicalReaction>
</comment>
<comment type="catalytic activity">
    <reaction evidence="10">
        <text>holo-[ACP] + malonyl-CoA = malonyl-[ACP] + CoA</text>
        <dbReference type="Rhea" id="RHEA:41792"/>
        <dbReference type="Rhea" id="RHEA-COMP:9623"/>
        <dbReference type="Rhea" id="RHEA-COMP:9685"/>
        <dbReference type="ChEBI" id="CHEBI:57287"/>
        <dbReference type="ChEBI" id="CHEBI:57384"/>
        <dbReference type="ChEBI" id="CHEBI:64479"/>
        <dbReference type="ChEBI" id="CHEBI:78449"/>
        <dbReference type="EC" id="2.3.1.39"/>
    </reaction>
    <physiologicalReaction direction="left-to-right" evidence="10">
        <dbReference type="Rhea" id="RHEA:41793"/>
    </physiologicalReaction>
</comment>
<comment type="catalytic activity">
    <reaction evidence="11">
        <text>a fatty acyl-[ACP] + malonyl-[ACP] + H(+) = a 3-oxoacyl-[ACP] + holo-[ACP] + CO2</text>
        <dbReference type="Rhea" id="RHEA:22836"/>
        <dbReference type="Rhea" id="RHEA-COMP:9623"/>
        <dbReference type="Rhea" id="RHEA-COMP:9685"/>
        <dbReference type="Rhea" id="RHEA-COMP:9916"/>
        <dbReference type="Rhea" id="RHEA-COMP:14125"/>
        <dbReference type="ChEBI" id="CHEBI:15378"/>
        <dbReference type="ChEBI" id="CHEBI:16526"/>
        <dbReference type="ChEBI" id="CHEBI:64479"/>
        <dbReference type="ChEBI" id="CHEBI:78449"/>
        <dbReference type="ChEBI" id="CHEBI:78776"/>
        <dbReference type="ChEBI" id="CHEBI:138651"/>
        <dbReference type="EC" id="2.3.1.41"/>
    </reaction>
    <physiologicalReaction direction="left-to-right" evidence="11">
        <dbReference type="Rhea" id="RHEA:22837"/>
    </physiologicalReaction>
</comment>
<comment type="catalytic activity">
    <reaction evidence="3">
        <text>a (3R)-hydroxyacyl-[ACP] + NADP(+) = a 3-oxoacyl-[ACP] + NADPH + H(+)</text>
        <dbReference type="Rhea" id="RHEA:17397"/>
        <dbReference type="Rhea" id="RHEA-COMP:9916"/>
        <dbReference type="Rhea" id="RHEA-COMP:9945"/>
        <dbReference type="ChEBI" id="CHEBI:15378"/>
        <dbReference type="ChEBI" id="CHEBI:57783"/>
        <dbReference type="ChEBI" id="CHEBI:58349"/>
        <dbReference type="ChEBI" id="CHEBI:78776"/>
        <dbReference type="ChEBI" id="CHEBI:78827"/>
        <dbReference type="EC" id="1.1.1.100"/>
    </reaction>
    <physiologicalReaction direction="right-to-left" evidence="3">
        <dbReference type="Rhea" id="RHEA:17399"/>
    </physiologicalReaction>
</comment>
<comment type="catalytic activity">
    <reaction evidence="3">
        <text>a (3R)-hydroxyacyl-[ACP] = a (2E)-enoyl-[ACP] + H2O</text>
        <dbReference type="Rhea" id="RHEA:13097"/>
        <dbReference type="Rhea" id="RHEA-COMP:9925"/>
        <dbReference type="Rhea" id="RHEA-COMP:9945"/>
        <dbReference type="ChEBI" id="CHEBI:15377"/>
        <dbReference type="ChEBI" id="CHEBI:78784"/>
        <dbReference type="ChEBI" id="CHEBI:78827"/>
        <dbReference type="EC" id="4.2.1.59"/>
    </reaction>
    <physiologicalReaction direction="left-to-right" evidence="3">
        <dbReference type="Rhea" id="RHEA:13098"/>
    </physiologicalReaction>
</comment>
<comment type="catalytic activity">
    <reaction evidence="3">
        <text>a 2,3-saturated acyl-[ACP] + NADP(+) = a (2E)-enoyl-[ACP] + NADPH + H(+)</text>
        <dbReference type="Rhea" id="RHEA:22564"/>
        <dbReference type="Rhea" id="RHEA-COMP:9925"/>
        <dbReference type="Rhea" id="RHEA-COMP:9926"/>
        <dbReference type="ChEBI" id="CHEBI:15378"/>
        <dbReference type="ChEBI" id="CHEBI:57783"/>
        <dbReference type="ChEBI" id="CHEBI:58349"/>
        <dbReference type="ChEBI" id="CHEBI:78784"/>
        <dbReference type="ChEBI" id="CHEBI:78785"/>
        <dbReference type="EC" id="1.3.1.39"/>
    </reaction>
    <physiologicalReaction direction="right-to-left" evidence="3">
        <dbReference type="Rhea" id="RHEA:22566"/>
    </physiologicalReaction>
</comment>
<comment type="catalytic activity">
    <reaction evidence="3">
        <text>hexadecanoyl-[ACP] + H2O = hexadecanoate + holo-[ACP] + H(+)</text>
        <dbReference type="Rhea" id="RHEA:41932"/>
        <dbReference type="Rhea" id="RHEA-COMP:9652"/>
        <dbReference type="Rhea" id="RHEA-COMP:9685"/>
        <dbReference type="ChEBI" id="CHEBI:7896"/>
        <dbReference type="ChEBI" id="CHEBI:15377"/>
        <dbReference type="ChEBI" id="CHEBI:15378"/>
        <dbReference type="ChEBI" id="CHEBI:64479"/>
        <dbReference type="ChEBI" id="CHEBI:78483"/>
        <dbReference type="EC" id="3.1.2.14"/>
    </reaction>
    <physiologicalReaction direction="left-to-right" evidence="3">
        <dbReference type="Rhea" id="RHEA:41933"/>
    </physiologicalReaction>
</comment>
<comment type="catalytic activity">
    <reaction evidence="15">
        <text>acetyl-[ACP] + malonyl-[ACP] + H(+) = 3-oxobutanoyl-[ACP] + holo-[ACP] + CO2</text>
        <dbReference type="Rhea" id="RHEA:41800"/>
        <dbReference type="Rhea" id="RHEA-COMP:9621"/>
        <dbReference type="Rhea" id="RHEA-COMP:9623"/>
        <dbReference type="Rhea" id="RHEA-COMP:9625"/>
        <dbReference type="Rhea" id="RHEA-COMP:9685"/>
        <dbReference type="ChEBI" id="CHEBI:15378"/>
        <dbReference type="ChEBI" id="CHEBI:16526"/>
        <dbReference type="ChEBI" id="CHEBI:64479"/>
        <dbReference type="ChEBI" id="CHEBI:78446"/>
        <dbReference type="ChEBI" id="CHEBI:78449"/>
        <dbReference type="ChEBI" id="CHEBI:78450"/>
    </reaction>
    <physiologicalReaction direction="left-to-right" evidence="15">
        <dbReference type="Rhea" id="RHEA:41801"/>
    </physiologicalReaction>
</comment>
<comment type="catalytic activity">
    <reaction evidence="3">
        <text>3-oxobutanoyl-[ACP] + NADPH + H(+) = (3R)-hydroxybutanoyl-[ACP] + NADP(+)</text>
        <dbReference type="Rhea" id="RHEA:41804"/>
        <dbReference type="Rhea" id="RHEA-COMP:9625"/>
        <dbReference type="Rhea" id="RHEA-COMP:9626"/>
        <dbReference type="ChEBI" id="CHEBI:15378"/>
        <dbReference type="ChEBI" id="CHEBI:57783"/>
        <dbReference type="ChEBI" id="CHEBI:58349"/>
        <dbReference type="ChEBI" id="CHEBI:78450"/>
        <dbReference type="ChEBI" id="CHEBI:78451"/>
    </reaction>
    <physiologicalReaction direction="left-to-right" evidence="3">
        <dbReference type="Rhea" id="RHEA:41805"/>
    </physiologicalReaction>
</comment>
<comment type="catalytic activity">
    <reaction evidence="3">
        <text>(3R)-hydroxybutanoyl-[ACP] = (2E)-butenoyl-[ACP] + H2O</text>
        <dbReference type="Rhea" id="RHEA:41808"/>
        <dbReference type="Rhea" id="RHEA-COMP:9626"/>
        <dbReference type="Rhea" id="RHEA-COMP:9627"/>
        <dbReference type="ChEBI" id="CHEBI:15377"/>
        <dbReference type="ChEBI" id="CHEBI:78451"/>
        <dbReference type="ChEBI" id="CHEBI:78453"/>
    </reaction>
    <physiologicalReaction direction="left-to-right" evidence="3">
        <dbReference type="Rhea" id="RHEA:41809"/>
    </physiologicalReaction>
</comment>
<comment type="catalytic activity">
    <reaction evidence="3">
        <text>(2E)-butenoyl-[ACP] + NADPH + H(+) = butanoyl-[ACP] + NADP(+)</text>
        <dbReference type="Rhea" id="RHEA:41812"/>
        <dbReference type="Rhea" id="RHEA-COMP:9627"/>
        <dbReference type="Rhea" id="RHEA-COMP:9628"/>
        <dbReference type="ChEBI" id="CHEBI:15378"/>
        <dbReference type="ChEBI" id="CHEBI:57783"/>
        <dbReference type="ChEBI" id="CHEBI:58349"/>
        <dbReference type="ChEBI" id="CHEBI:78453"/>
        <dbReference type="ChEBI" id="CHEBI:78454"/>
    </reaction>
    <physiologicalReaction direction="left-to-right" evidence="3">
        <dbReference type="Rhea" id="RHEA:41813"/>
    </physiologicalReaction>
</comment>
<comment type="catalytic activity">
    <reaction evidence="15">
        <text>butanoyl-[ACP] + malonyl-[ACP] + H(+) = 3-oxohexanoyl-[ACP] + holo-[ACP] + CO2</text>
        <dbReference type="Rhea" id="RHEA:41820"/>
        <dbReference type="Rhea" id="RHEA-COMP:9623"/>
        <dbReference type="Rhea" id="RHEA-COMP:9628"/>
        <dbReference type="Rhea" id="RHEA-COMP:9629"/>
        <dbReference type="Rhea" id="RHEA-COMP:9685"/>
        <dbReference type="ChEBI" id="CHEBI:15378"/>
        <dbReference type="ChEBI" id="CHEBI:16526"/>
        <dbReference type="ChEBI" id="CHEBI:64479"/>
        <dbReference type="ChEBI" id="CHEBI:78449"/>
        <dbReference type="ChEBI" id="CHEBI:78454"/>
        <dbReference type="ChEBI" id="CHEBI:78456"/>
    </reaction>
    <physiologicalReaction direction="left-to-right" evidence="15">
        <dbReference type="Rhea" id="RHEA:41821"/>
    </physiologicalReaction>
</comment>
<comment type="catalytic activity">
    <reaction evidence="3">
        <text>3-oxohexanoyl-[ACP] + NADPH + H(+) = (3R)-hydroxyhexanoyl-[ACP] + NADP(+)</text>
        <dbReference type="Rhea" id="RHEA:41824"/>
        <dbReference type="Rhea" id="RHEA-COMP:9629"/>
        <dbReference type="Rhea" id="RHEA-COMP:9630"/>
        <dbReference type="ChEBI" id="CHEBI:15378"/>
        <dbReference type="ChEBI" id="CHEBI:57783"/>
        <dbReference type="ChEBI" id="CHEBI:58349"/>
        <dbReference type="ChEBI" id="CHEBI:78456"/>
        <dbReference type="ChEBI" id="CHEBI:78457"/>
    </reaction>
    <physiologicalReaction direction="left-to-right" evidence="3">
        <dbReference type="Rhea" id="RHEA:41825"/>
    </physiologicalReaction>
</comment>
<comment type="catalytic activity">
    <reaction evidence="3">
        <text>(3R)-hydroxyhexanoyl-[ACP] = (2E)-hexenoyl-[ACP] + H2O</text>
        <dbReference type="Rhea" id="RHEA:41828"/>
        <dbReference type="Rhea" id="RHEA-COMP:9630"/>
        <dbReference type="Rhea" id="RHEA-COMP:9631"/>
        <dbReference type="ChEBI" id="CHEBI:15377"/>
        <dbReference type="ChEBI" id="CHEBI:78457"/>
        <dbReference type="ChEBI" id="CHEBI:78458"/>
    </reaction>
    <physiologicalReaction direction="left-to-right" evidence="3">
        <dbReference type="Rhea" id="RHEA:41829"/>
    </physiologicalReaction>
</comment>
<comment type="catalytic activity">
    <reaction evidence="3">
        <text>(2E)-hexenoyl-[ACP] + NADPH + H(+) = hexanoyl-[ACP] + NADP(+)</text>
        <dbReference type="Rhea" id="RHEA:41832"/>
        <dbReference type="Rhea" id="RHEA-COMP:9631"/>
        <dbReference type="Rhea" id="RHEA-COMP:9632"/>
        <dbReference type="ChEBI" id="CHEBI:15378"/>
        <dbReference type="ChEBI" id="CHEBI:57783"/>
        <dbReference type="ChEBI" id="CHEBI:58349"/>
        <dbReference type="ChEBI" id="CHEBI:78458"/>
        <dbReference type="ChEBI" id="CHEBI:78459"/>
    </reaction>
    <physiologicalReaction direction="left-to-right" evidence="3">
        <dbReference type="Rhea" id="RHEA:41833"/>
    </physiologicalReaction>
</comment>
<comment type="catalytic activity">
    <reaction evidence="11">
        <text>hexanoyl-[ACP] + malonyl-[ACP] + H(+) = 3-oxooctanoyl-[ACP] + holo-[ACP] + CO2</text>
        <dbReference type="Rhea" id="RHEA:41836"/>
        <dbReference type="Rhea" id="RHEA-COMP:9623"/>
        <dbReference type="Rhea" id="RHEA-COMP:9632"/>
        <dbReference type="Rhea" id="RHEA-COMP:9633"/>
        <dbReference type="Rhea" id="RHEA-COMP:9685"/>
        <dbReference type="ChEBI" id="CHEBI:15378"/>
        <dbReference type="ChEBI" id="CHEBI:16526"/>
        <dbReference type="ChEBI" id="CHEBI:64479"/>
        <dbReference type="ChEBI" id="CHEBI:78449"/>
        <dbReference type="ChEBI" id="CHEBI:78459"/>
        <dbReference type="ChEBI" id="CHEBI:78460"/>
    </reaction>
    <physiologicalReaction direction="left-to-right" evidence="11">
        <dbReference type="Rhea" id="RHEA:41837"/>
    </physiologicalReaction>
</comment>
<comment type="catalytic activity">
    <reaction evidence="3">
        <text>3-oxooctanoyl-[ACP] + NADPH + H(+) = (3R)-hydroxyoctanoyl-[ACP] + NADP(+)</text>
        <dbReference type="Rhea" id="RHEA:41840"/>
        <dbReference type="Rhea" id="RHEA-COMP:9633"/>
        <dbReference type="Rhea" id="RHEA-COMP:9634"/>
        <dbReference type="ChEBI" id="CHEBI:15378"/>
        <dbReference type="ChEBI" id="CHEBI:57783"/>
        <dbReference type="ChEBI" id="CHEBI:58349"/>
        <dbReference type="ChEBI" id="CHEBI:78460"/>
        <dbReference type="ChEBI" id="CHEBI:78461"/>
    </reaction>
    <physiologicalReaction direction="left-to-right" evidence="3">
        <dbReference type="Rhea" id="RHEA:41841"/>
    </physiologicalReaction>
</comment>
<comment type="catalytic activity">
    <reaction evidence="3">
        <text>(3R)-hydroxyoctanoyl-[ACP] = (2E)-octenoyl-[ACP] + H2O</text>
        <dbReference type="Rhea" id="RHEA:41844"/>
        <dbReference type="Rhea" id="RHEA-COMP:9634"/>
        <dbReference type="Rhea" id="RHEA-COMP:9635"/>
        <dbReference type="ChEBI" id="CHEBI:15377"/>
        <dbReference type="ChEBI" id="CHEBI:78461"/>
        <dbReference type="ChEBI" id="CHEBI:78462"/>
    </reaction>
    <physiologicalReaction direction="left-to-right" evidence="3">
        <dbReference type="Rhea" id="RHEA:41845"/>
    </physiologicalReaction>
</comment>
<comment type="catalytic activity">
    <reaction evidence="3">
        <text>(2E)-octenoyl-[ACP] + NADPH + H(+) = octanoyl-[ACP] + NADP(+)</text>
        <dbReference type="Rhea" id="RHEA:41848"/>
        <dbReference type="Rhea" id="RHEA-COMP:9635"/>
        <dbReference type="Rhea" id="RHEA-COMP:9636"/>
        <dbReference type="ChEBI" id="CHEBI:15378"/>
        <dbReference type="ChEBI" id="CHEBI:57783"/>
        <dbReference type="ChEBI" id="CHEBI:58349"/>
        <dbReference type="ChEBI" id="CHEBI:78462"/>
        <dbReference type="ChEBI" id="CHEBI:78463"/>
    </reaction>
    <physiologicalReaction direction="left-to-right" evidence="3">
        <dbReference type="Rhea" id="RHEA:41849"/>
    </physiologicalReaction>
</comment>
<comment type="catalytic activity">
    <reaction evidence="11">
        <text>octanoyl-[ACP] + malonyl-[ACP] + H(+) = 3-oxodecanoyl-[ACP] + holo-[ACP] + CO2</text>
        <dbReference type="Rhea" id="RHEA:41852"/>
        <dbReference type="Rhea" id="RHEA-COMP:9623"/>
        <dbReference type="Rhea" id="RHEA-COMP:9636"/>
        <dbReference type="Rhea" id="RHEA-COMP:9637"/>
        <dbReference type="Rhea" id="RHEA-COMP:9685"/>
        <dbReference type="ChEBI" id="CHEBI:15378"/>
        <dbReference type="ChEBI" id="CHEBI:16526"/>
        <dbReference type="ChEBI" id="CHEBI:64479"/>
        <dbReference type="ChEBI" id="CHEBI:78449"/>
        <dbReference type="ChEBI" id="CHEBI:78463"/>
        <dbReference type="ChEBI" id="CHEBI:78464"/>
    </reaction>
    <physiologicalReaction direction="left-to-right" evidence="11">
        <dbReference type="Rhea" id="RHEA:41853"/>
    </physiologicalReaction>
</comment>
<comment type="catalytic activity">
    <reaction evidence="3">
        <text>3-oxodecanoyl-[ACP] + NADPH + H(+) = (3R)-hydroxydecanoyl-[ACP] + NADP(+)</text>
        <dbReference type="Rhea" id="RHEA:41856"/>
        <dbReference type="Rhea" id="RHEA-COMP:9637"/>
        <dbReference type="Rhea" id="RHEA-COMP:9638"/>
        <dbReference type="ChEBI" id="CHEBI:15378"/>
        <dbReference type="ChEBI" id="CHEBI:57783"/>
        <dbReference type="ChEBI" id="CHEBI:58349"/>
        <dbReference type="ChEBI" id="CHEBI:78464"/>
        <dbReference type="ChEBI" id="CHEBI:78466"/>
    </reaction>
    <physiologicalReaction direction="left-to-right" evidence="3">
        <dbReference type="Rhea" id="RHEA:41857"/>
    </physiologicalReaction>
</comment>
<comment type="catalytic activity">
    <reaction evidence="3">
        <text>(3R)-hydroxydecanoyl-[ACP] = (2E)-decenoyl-[ACP] + H2O</text>
        <dbReference type="Rhea" id="RHEA:41860"/>
        <dbReference type="Rhea" id="RHEA-COMP:9638"/>
        <dbReference type="Rhea" id="RHEA-COMP:9639"/>
        <dbReference type="ChEBI" id="CHEBI:15377"/>
        <dbReference type="ChEBI" id="CHEBI:78466"/>
        <dbReference type="ChEBI" id="CHEBI:78467"/>
    </reaction>
    <physiologicalReaction direction="left-to-right" evidence="3">
        <dbReference type="Rhea" id="RHEA:41861"/>
    </physiologicalReaction>
</comment>
<comment type="catalytic activity">
    <reaction evidence="3">
        <text>(2E)-decenoyl-[ACP] + NADPH + H(+) = decanoyl-[ACP] + NADP(+)</text>
        <dbReference type="Rhea" id="RHEA:41864"/>
        <dbReference type="Rhea" id="RHEA-COMP:9639"/>
        <dbReference type="Rhea" id="RHEA-COMP:9640"/>
        <dbReference type="ChEBI" id="CHEBI:15378"/>
        <dbReference type="ChEBI" id="CHEBI:57783"/>
        <dbReference type="ChEBI" id="CHEBI:58349"/>
        <dbReference type="ChEBI" id="CHEBI:78467"/>
        <dbReference type="ChEBI" id="CHEBI:78468"/>
    </reaction>
    <physiologicalReaction direction="left-to-right" evidence="3">
        <dbReference type="Rhea" id="RHEA:41865"/>
    </physiologicalReaction>
</comment>
<comment type="catalytic activity">
    <reaction evidence="11">
        <text>decanoyl-[ACP] + malonyl-[ACP] + H(+) = 3-oxododecanoyl-[ACP] + holo-[ACP] + CO2</text>
        <dbReference type="Rhea" id="RHEA:41868"/>
        <dbReference type="Rhea" id="RHEA-COMP:9623"/>
        <dbReference type="Rhea" id="RHEA-COMP:9640"/>
        <dbReference type="Rhea" id="RHEA-COMP:9641"/>
        <dbReference type="Rhea" id="RHEA-COMP:9685"/>
        <dbReference type="ChEBI" id="CHEBI:15378"/>
        <dbReference type="ChEBI" id="CHEBI:16526"/>
        <dbReference type="ChEBI" id="CHEBI:64479"/>
        <dbReference type="ChEBI" id="CHEBI:78449"/>
        <dbReference type="ChEBI" id="CHEBI:78468"/>
        <dbReference type="ChEBI" id="CHEBI:78469"/>
    </reaction>
    <physiologicalReaction direction="left-to-right" evidence="11">
        <dbReference type="Rhea" id="RHEA:41869"/>
    </physiologicalReaction>
</comment>
<comment type="catalytic activity">
    <reaction evidence="3">
        <text>3-oxododecanoyl-[ACP] + NADPH + H(+) = (3R)-hydroxydodecanoyl-[ACP] + NADP(+)</text>
        <dbReference type="Rhea" id="RHEA:41872"/>
        <dbReference type="Rhea" id="RHEA-COMP:9641"/>
        <dbReference type="Rhea" id="RHEA-COMP:9642"/>
        <dbReference type="ChEBI" id="CHEBI:15378"/>
        <dbReference type="ChEBI" id="CHEBI:57783"/>
        <dbReference type="ChEBI" id="CHEBI:58349"/>
        <dbReference type="ChEBI" id="CHEBI:78469"/>
        <dbReference type="ChEBI" id="CHEBI:78470"/>
    </reaction>
    <physiologicalReaction direction="left-to-right" evidence="3">
        <dbReference type="Rhea" id="RHEA:41873"/>
    </physiologicalReaction>
</comment>
<comment type="catalytic activity">
    <reaction evidence="3">
        <text>(3R)-hydroxydodecanoyl-[ACP] = (2E)-dodecenoyl-[ACP] + H2O</text>
        <dbReference type="Rhea" id="RHEA:41876"/>
        <dbReference type="Rhea" id="RHEA-COMP:9642"/>
        <dbReference type="Rhea" id="RHEA-COMP:9643"/>
        <dbReference type="ChEBI" id="CHEBI:15377"/>
        <dbReference type="ChEBI" id="CHEBI:78470"/>
        <dbReference type="ChEBI" id="CHEBI:78472"/>
    </reaction>
    <physiologicalReaction direction="left-to-right" evidence="3">
        <dbReference type="Rhea" id="RHEA:41877"/>
    </physiologicalReaction>
</comment>
<comment type="catalytic activity">
    <reaction evidence="3">
        <text>(2E)-dodecenoyl-[ACP] + NADPH + H(+) = dodecanoyl-[ACP] + NADP(+)</text>
        <dbReference type="Rhea" id="RHEA:41880"/>
        <dbReference type="Rhea" id="RHEA-COMP:9643"/>
        <dbReference type="Rhea" id="RHEA-COMP:9644"/>
        <dbReference type="ChEBI" id="CHEBI:15378"/>
        <dbReference type="ChEBI" id="CHEBI:57783"/>
        <dbReference type="ChEBI" id="CHEBI:58349"/>
        <dbReference type="ChEBI" id="CHEBI:65264"/>
        <dbReference type="ChEBI" id="CHEBI:78472"/>
    </reaction>
    <physiologicalReaction direction="left-to-right" evidence="3">
        <dbReference type="Rhea" id="RHEA:41881"/>
    </physiologicalReaction>
</comment>
<comment type="catalytic activity">
    <reaction evidence="11">
        <text>dodecanoyl-[ACP] + malonyl-[ACP] + H(+) = 3-oxotetradecanoyl-[ACP] + holo-[ACP] + CO2</text>
        <dbReference type="Rhea" id="RHEA:41884"/>
        <dbReference type="Rhea" id="RHEA-COMP:9623"/>
        <dbReference type="Rhea" id="RHEA-COMP:9644"/>
        <dbReference type="Rhea" id="RHEA-COMP:9645"/>
        <dbReference type="Rhea" id="RHEA-COMP:9685"/>
        <dbReference type="ChEBI" id="CHEBI:15378"/>
        <dbReference type="ChEBI" id="CHEBI:16526"/>
        <dbReference type="ChEBI" id="CHEBI:64479"/>
        <dbReference type="ChEBI" id="CHEBI:65264"/>
        <dbReference type="ChEBI" id="CHEBI:78449"/>
        <dbReference type="ChEBI" id="CHEBI:78473"/>
    </reaction>
    <physiologicalReaction direction="left-to-right" evidence="11">
        <dbReference type="Rhea" id="RHEA:41885"/>
    </physiologicalReaction>
</comment>
<comment type="catalytic activity">
    <reaction evidence="3">
        <text>3-oxotetradecanoyl-[ACP] + NADPH + H(+) = (3R)-hydroxytetradecanoyl-[ACP] + NADP(+)</text>
        <dbReference type="Rhea" id="RHEA:41888"/>
        <dbReference type="Rhea" id="RHEA-COMP:9645"/>
        <dbReference type="Rhea" id="RHEA-COMP:9646"/>
        <dbReference type="ChEBI" id="CHEBI:15378"/>
        <dbReference type="ChEBI" id="CHEBI:57783"/>
        <dbReference type="ChEBI" id="CHEBI:58349"/>
        <dbReference type="ChEBI" id="CHEBI:78473"/>
        <dbReference type="ChEBI" id="CHEBI:78474"/>
    </reaction>
    <physiologicalReaction direction="left-to-right" evidence="3">
        <dbReference type="Rhea" id="RHEA:41889"/>
    </physiologicalReaction>
</comment>
<comment type="catalytic activity">
    <reaction evidence="3">
        <text>(3R)-hydroxytetradecanoyl-[ACP] = (2E)-tetradecenoyl-[ACP] + H2O</text>
        <dbReference type="Rhea" id="RHEA:41892"/>
        <dbReference type="Rhea" id="RHEA-COMP:9646"/>
        <dbReference type="Rhea" id="RHEA-COMP:9647"/>
        <dbReference type="ChEBI" id="CHEBI:15377"/>
        <dbReference type="ChEBI" id="CHEBI:78474"/>
        <dbReference type="ChEBI" id="CHEBI:78475"/>
    </reaction>
    <physiologicalReaction direction="left-to-right" evidence="3">
        <dbReference type="Rhea" id="RHEA:41893"/>
    </physiologicalReaction>
</comment>
<comment type="catalytic activity">
    <reaction evidence="3">
        <text>(2E)-tetradecenoyl-[ACP] + NADPH + H(+) = tetradecanoyl-[ACP] + NADP(+)</text>
        <dbReference type="Rhea" id="RHEA:41896"/>
        <dbReference type="Rhea" id="RHEA-COMP:9647"/>
        <dbReference type="Rhea" id="RHEA-COMP:9648"/>
        <dbReference type="ChEBI" id="CHEBI:15378"/>
        <dbReference type="ChEBI" id="CHEBI:57783"/>
        <dbReference type="ChEBI" id="CHEBI:58349"/>
        <dbReference type="ChEBI" id="CHEBI:78475"/>
        <dbReference type="ChEBI" id="CHEBI:78477"/>
    </reaction>
    <physiologicalReaction direction="left-to-right" evidence="3">
        <dbReference type="Rhea" id="RHEA:41897"/>
    </physiologicalReaction>
</comment>
<comment type="catalytic activity">
    <reaction evidence="11">
        <text>tetradecanoyl-[ACP] + malonyl-[ACP] + H(+) = 3-oxohexadecanoyl-[ACP] + holo-[ACP] + CO2</text>
        <dbReference type="Rhea" id="RHEA:41900"/>
        <dbReference type="Rhea" id="RHEA-COMP:9623"/>
        <dbReference type="Rhea" id="RHEA-COMP:9648"/>
        <dbReference type="Rhea" id="RHEA-COMP:9649"/>
        <dbReference type="Rhea" id="RHEA-COMP:9685"/>
        <dbReference type="ChEBI" id="CHEBI:15378"/>
        <dbReference type="ChEBI" id="CHEBI:16526"/>
        <dbReference type="ChEBI" id="CHEBI:64479"/>
        <dbReference type="ChEBI" id="CHEBI:78449"/>
        <dbReference type="ChEBI" id="CHEBI:78477"/>
        <dbReference type="ChEBI" id="CHEBI:78478"/>
    </reaction>
    <physiologicalReaction direction="left-to-right" evidence="11">
        <dbReference type="Rhea" id="RHEA:41901"/>
    </physiologicalReaction>
</comment>
<comment type="catalytic activity">
    <reaction evidence="3">
        <text>3-oxohexadecanoyl-[ACP] + NADPH + H(+) = (3R)-hydroxyhexadecanoyl-[ACP] + NADP(+)</text>
        <dbReference type="Rhea" id="RHEA:41904"/>
        <dbReference type="Rhea" id="RHEA-COMP:9649"/>
        <dbReference type="Rhea" id="RHEA-COMP:9650"/>
        <dbReference type="ChEBI" id="CHEBI:15378"/>
        <dbReference type="ChEBI" id="CHEBI:57783"/>
        <dbReference type="ChEBI" id="CHEBI:58349"/>
        <dbReference type="ChEBI" id="CHEBI:78478"/>
        <dbReference type="ChEBI" id="CHEBI:78480"/>
    </reaction>
    <physiologicalReaction direction="left-to-right" evidence="3">
        <dbReference type="Rhea" id="RHEA:41905"/>
    </physiologicalReaction>
</comment>
<comment type="catalytic activity">
    <reaction evidence="3">
        <text>(3R)-hydroxyhexadecanoyl-[ACP] = (2E)-hexadecenoyl-[ACP] + H2O</text>
        <dbReference type="Rhea" id="RHEA:41908"/>
        <dbReference type="Rhea" id="RHEA-COMP:9650"/>
        <dbReference type="Rhea" id="RHEA-COMP:9651"/>
        <dbReference type="ChEBI" id="CHEBI:15377"/>
        <dbReference type="ChEBI" id="CHEBI:78480"/>
        <dbReference type="ChEBI" id="CHEBI:78481"/>
    </reaction>
    <physiologicalReaction direction="left-to-right" evidence="3">
        <dbReference type="Rhea" id="RHEA:41909"/>
    </physiologicalReaction>
</comment>
<comment type="catalytic activity">
    <reaction evidence="3">
        <text>(2E)-hexadecenoyl-[ACP] + NADPH + H(+) = hexadecanoyl-[ACP] + NADP(+)</text>
        <dbReference type="Rhea" id="RHEA:41912"/>
        <dbReference type="Rhea" id="RHEA-COMP:9651"/>
        <dbReference type="Rhea" id="RHEA-COMP:9652"/>
        <dbReference type="ChEBI" id="CHEBI:15378"/>
        <dbReference type="ChEBI" id="CHEBI:57783"/>
        <dbReference type="ChEBI" id="CHEBI:58349"/>
        <dbReference type="ChEBI" id="CHEBI:78481"/>
        <dbReference type="ChEBI" id="CHEBI:78483"/>
    </reaction>
    <physiologicalReaction direction="left-to-right" evidence="3">
        <dbReference type="Rhea" id="RHEA:41913"/>
    </physiologicalReaction>
</comment>
<comment type="catalytic activity">
    <reaction evidence="3">
        <text>hexadecanoyl-[ACP] + malonyl-[ACP] + H(+) = 3-oxooctadecanoyl-[ACP] + holo-[ACP] + CO2</text>
        <dbReference type="Rhea" id="RHEA:41916"/>
        <dbReference type="Rhea" id="RHEA-COMP:9623"/>
        <dbReference type="Rhea" id="RHEA-COMP:9652"/>
        <dbReference type="Rhea" id="RHEA-COMP:9653"/>
        <dbReference type="Rhea" id="RHEA-COMP:9685"/>
        <dbReference type="ChEBI" id="CHEBI:15378"/>
        <dbReference type="ChEBI" id="CHEBI:16526"/>
        <dbReference type="ChEBI" id="CHEBI:64479"/>
        <dbReference type="ChEBI" id="CHEBI:78449"/>
        <dbReference type="ChEBI" id="CHEBI:78483"/>
        <dbReference type="ChEBI" id="CHEBI:78487"/>
    </reaction>
    <physiologicalReaction direction="left-to-right" evidence="3">
        <dbReference type="Rhea" id="RHEA:41917"/>
    </physiologicalReaction>
</comment>
<comment type="catalytic activity">
    <reaction evidence="3">
        <text>3-oxooctadecanoyl-[ACP] + NADPH + H(+) = (3R)-hydroxyoctadecanoyl-[ACP] + NADP(+)</text>
        <dbReference type="Rhea" id="RHEA:41920"/>
        <dbReference type="Rhea" id="RHEA-COMP:9653"/>
        <dbReference type="Rhea" id="RHEA-COMP:9654"/>
        <dbReference type="ChEBI" id="CHEBI:15378"/>
        <dbReference type="ChEBI" id="CHEBI:57783"/>
        <dbReference type="ChEBI" id="CHEBI:58349"/>
        <dbReference type="ChEBI" id="CHEBI:78487"/>
        <dbReference type="ChEBI" id="CHEBI:78488"/>
    </reaction>
    <physiologicalReaction direction="left-to-right" evidence="3">
        <dbReference type="Rhea" id="RHEA:41921"/>
    </physiologicalReaction>
</comment>
<comment type="catalytic activity">
    <reaction evidence="3">
        <text>(3R)-hydroxyoctadecanoyl-[ACP] = (2E)-octadecenoyl-[ACP] + H2O</text>
        <dbReference type="Rhea" id="RHEA:41924"/>
        <dbReference type="Rhea" id="RHEA-COMP:9654"/>
        <dbReference type="Rhea" id="RHEA-COMP:9655"/>
        <dbReference type="ChEBI" id="CHEBI:15377"/>
        <dbReference type="ChEBI" id="CHEBI:78488"/>
        <dbReference type="ChEBI" id="CHEBI:78489"/>
    </reaction>
    <physiologicalReaction direction="left-to-right" evidence="3">
        <dbReference type="Rhea" id="RHEA:41925"/>
    </physiologicalReaction>
</comment>
<comment type="catalytic activity">
    <reaction evidence="3">
        <text>(2E)-octadecenoyl-[ACP] + NADPH + H(+) = octadecanoyl-[ACP] + NADP(+)</text>
        <dbReference type="Rhea" id="RHEA:41928"/>
        <dbReference type="Rhea" id="RHEA-COMP:9655"/>
        <dbReference type="Rhea" id="RHEA-COMP:9656"/>
        <dbReference type="ChEBI" id="CHEBI:15378"/>
        <dbReference type="ChEBI" id="CHEBI:57783"/>
        <dbReference type="ChEBI" id="CHEBI:58349"/>
        <dbReference type="ChEBI" id="CHEBI:78489"/>
        <dbReference type="ChEBI" id="CHEBI:78495"/>
    </reaction>
    <physiologicalReaction direction="left-to-right" evidence="3">
        <dbReference type="Rhea" id="RHEA:41929"/>
    </physiologicalReaction>
</comment>
<comment type="catalytic activity">
    <reaction evidence="3">
        <text>tetradecanoyl-[ACP] + H2O = tetradecanoate + holo-[ACP] + H(+)</text>
        <dbReference type="Rhea" id="RHEA:30123"/>
        <dbReference type="Rhea" id="RHEA-COMP:9648"/>
        <dbReference type="Rhea" id="RHEA-COMP:9685"/>
        <dbReference type="ChEBI" id="CHEBI:15377"/>
        <dbReference type="ChEBI" id="CHEBI:15378"/>
        <dbReference type="ChEBI" id="CHEBI:30807"/>
        <dbReference type="ChEBI" id="CHEBI:64479"/>
        <dbReference type="ChEBI" id="CHEBI:78477"/>
        <dbReference type="EC" id="3.1.2.14"/>
    </reaction>
    <physiologicalReaction direction="left-to-right" evidence="3">
        <dbReference type="Rhea" id="RHEA:30124"/>
    </physiologicalReaction>
</comment>
<comment type="biophysicochemical properties">
    <kinetics>
        <KM evidence="10">1.28 uM for malonyl-CoA</KM>
        <KM evidence="10">1.63 uM for acetyl-CoA</KM>
    </kinetics>
</comment>
<comment type="pathway">
    <text evidence="10">Lipid metabolism; fatty acid biosynthesis.</text>
</comment>
<comment type="subunit">
    <text evidence="2 3">Homodimer which is arranged in a head to tail fashion (By similarity). Interacts with CEACAM1; this interaction is insulin and phosphorylation-dependent; reduces fatty-acid synthase activity (By similarity).</text>
</comment>
<comment type="subcellular location">
    <subcellularLocation>
        <location evidence="1">Cytoplasm</location>
    </subcellularLocation>
    <subcellularLocation>
        <location evidence="1">Melanosome</location>
    </subcellularLocation>
</comment>
<comment type="induction">
    <text evidence="9">Up-regulated by endocannabinoid anandamide/AEA.</text>
</comment>
<comment type="PTM">
    <text evidence="3">S-nitrosylation of Fatty acid synthase at cysteine residues Cys-1464 or Cys-2084 is important for the enzyme dimerization. In adipocytes, S-nitrosylation of Fatty acid synthase occurs under physiological conditions and gradually increases during adipogenesis.</text>
</comment>
<comment type="sequence caution" evidence="14">
    <conflict type="frameshift">
        <sequence resource="EMBL-CDS" id="CAA31525"/>
    </conflict>
</comment>
<reference key="1">
    <citation type="journal article" date="2000" name="Genes Cells">
        <title>Involvement of fatty acid synthase in axonal development in mouse embryos.</title>
        <authorList>
            <person name="Ueno K."/>
        </authorList>
    </citation>
    <scope>NUCLEOTIDE SEQUENCE [MRNA]</scope>
    <source>
        <strain>C57BL/6J</strain>
    </source>
</reference>
<reference key="2">
    <citation type="journal article" date="2009" name="PLoS Biol.">
        <title>Lineage-specific biology revealed by a finished genome assembly of the mouse.</title>
        <authorList>
            <person name="Church D.M."/>
            <person name="Goodstadt L."/>
            <person name="Hillier L.W."/>
            <person name="Zody M.C."/>
            <person name="Goldstein S."/>
            <person name="She X."/>
            <person name="Bult C.J."/>
            <person name="Agarwala R."/>
            <person name="Cherry J.L."/>
            <person name="DiCuccio M."/>
            <person name="Hlavina W."/>
            <person name="Kapustin Y."/>
            <person name="Meric P."/>
            <person name="Maglott D."/>
            <person name="Birtle Z."/>
            <person name="Marques A.C."/>
            <person name="Graves T."/>
            <person name="Zhou S."/>
            <person name="Teague B."/>
            <person name="Potamousis K."/>
            <person name="Churas C."/>
            <person name="Place M."/>
            <person name="Herschleb J."/>
            <person name="Runnheim R."/>
            <person name="Forrest D."/>
            <person name="Amos-Landgraf J."/>
            <person name="Schwartz D.C."/>
            <person name="Cheng Z."/>
            <person name="Lindblad-Toh K."/>
            <person name="Eichler E.E."/>
            <person name="Ponting C.P."/>
        </authorList>
    </citation>
    <scope>NUCLEOTIDE SEQUENCE [LARGE SCALE GENOMIC DNA]</scope>
    <source>
        <strain>C57BL/6J</strain>
    </source>
</reference>
<reference key="3">
    <citation type="journal article" date="2004" name="Genome Res.">
        <title>The status, quality, and expansion of the NIH full-length cDNA project: the Mammalian Gene Collection (MGC).</title>
        <authorList>
            <consortium name="The MGC Project Team"/>
        </authorList>
    </citation>
    <scope>NUCLEOTIDE SEQUENCE [LARGE SCALE MRNA]</scope>
    <source>
        <strain>FVB/N</strain>
        <tissue>Brain</tissue>
        <tissue>Liver</tissue>
    </source>
</reference>
<reference key="4">
    <citation type="submission" date="2005-07" db="UniProtKB">
        <authorList>
            <person name="Bienvenut W.V."/>
        </authorList>
    </citation>
    <scope>PROTEIN SEQUENCE OF 1-12; 225-235; 299-310; 385-409; 469-478; 1252-1270; 1333-1344; 1388-1398; 1501-1508; 1705-1717; 1733-1745; 2124-2132; 2376-2384 AND 2476-2498</scope>
    <scope>ACETYLATION AT MET-1</scope>
    <scope>IDENTIFICATION BY MASS SPECTROMETRY</scope>
    <source>
        <strain>C57BL/6J</strain>
        <tissue>Liver</tissue>
    </source>
</reference>
<reference key="5">
    <citation type="journal article" date="2005" name="Science">
        <title>The transcriptional landscape of the mammalian genome.</title>
        <authorList>
            <person name="Carninci P."/>
            <person name="Kasukawa T."/>
            <person name="Katayama S."/>
            <person name="Gough J."/>
            <person name="Frith M.C."/>
            <person name="Maeda N."/>
            <person name="Oyama R."/>
            <person name="Ravasi T."/>
            <person name="Lenhard B."/>
            <person name="Wells C."/>
            <person name="Kodzius R."/>
            <person name="Shimokawa K."/>
            <person name="Bajic V.B."/>
            <person name="Brenner S.E."/>
            <person name="Batalov S."/>
            <person name="Forrest A.R."/>
            <person name="Zavolan M."/>
            <person name="Davis M.J."/>
            <person name="Wilming L.G."/>
            <person name="Aidinis V."/>
            <person name="Allen J.E."/>
            <person name="Ambesi-Impiombato A."/>
            <person name="Apweiler R."/>
            <person name="Aturaliya R.N."/>
            <person name="Bailey T.L."/>
            <person name="Bansal M."/>
            <person name="Baxter L."/>
            <person name="Beisel K.W."/>
            <person name="Bersano T."/>
            <person name="Bono H."/>
            <person name="Chalk A.M."/>
            <person name="Chiu K.P."/>
            <person name="Choudhary V."/>
            <person name="Christoffels A."/>
            <person name="Clutterbuck D.R."/>
            <person name="Crowe M.L."/>
            <person name="Dalla E."/>
            <person name="Dalrymple B.P."/>
            <person name="de Bono B."/>
            <person name="Della Gatta G."/>
            <person name="di Bernardo D."/>
            <person name="Down T."/>
            <person name="Engstrom P."/>
            <person name="Fagiolini M."/>
            <person name="Faulkner G."/>
            <person name="Fletcher C.F."/>
            <person name="Fukushima T."/>
            <person name="Furuno M."/>
            <person name="Futaki S."/>
            <person name="Gariboldi M."/>
            <person name="Georgii-Hemming P."/>
            <person name="Gingeras T.R."/>
            <person name="Gojobori T."/>
            <person name="Green R.E."/>
            <person name="Gustincich S."/>
            <person name="Harbers M."/>
            <person name="Hayashi Y."/>
            <person name="Hensch T.K."/>
            <person name="Hirokawa N."/>
            <person name="Hill D."/>
            <person name="Huminiecki L."/>
            <person name="Iacono M."/>
            <person name="Ikeo K."/>
            <person name="Iwama A."/>
            <person name="Ishikawa T."/>
            <person name="Jakt M."/>
            <person name="Kanapin A."/>
            <person name="Katoh M."/>
            <person name="Kawasawa Y."/>
            <person name="Kelso J."/>
            <person name="Kitamura H."/>
            <person name="Kitano H."/>
            <person name="Kollias G."/>
            <person name="Krishnan S.P."/>
            <person name="Kruger A."/>
            <person name="Kummerfeld S.K."/>
            <person name="Kurochkin I.V."/>
            <person name="Lareau L.F."/>
            <person name="Lazarevic D."/>
            <person name="Lipovich L."/>
            <person name="Liu J."/>
            <person name="Liuni S."/>
            <person name="McWilliam S."/>
            <person name="Madan Babu M."/>
            <person name="Madera M."/>
            <person name="Marchionni L."/>
            <person name="Matsuda H."/>
            <person name="Matsuzawa S."/>
            <person name="Miki H."/>
            <person name="Mignone F."/>
            <person name="Miyake S."/>
            <person name="Morris K."/>
            <person name="Mottagui-Tabar S."/>
            <person name="Mulder N."/>
            <person name="Nakano N."/>
            <person name="Nakauchi H."/>
            <person name="Ng P."/>
            <person name="Nilsson R."/>
            <person name="Nishiguchi S."/>
            <person name="Nishikawa S."/>
            <person name="Nori F."/>
            <person name="Ohara O."/>
            <person name="Okazaki Y."/>
            <person name="Orlando V."/>
            <person name="Pang K.C."/>
            <person name="Pavan W.J."/>
            <person name="Pavesi G."/>
            <person name="Pesole G."/>
            <person name="Petrovsky N."/>
            <person name="Piazza S."/>
            <person name="Reed J."/>
            <person name="Reid J.F."/>
            <person name="Ring B.Z."/>
            <person name="Ringwald M."/>
            <person name="Rost B."/>
            <person name="Ruan Y."/>
            <person name="Salzberg S.L."/>
            <person name="Sandelin A."/>
            <person name="Schneider C."/>
            <person name="Schoenbach C."/>
            <person name="Sekiguchi K."/>
            <person name="Semple C.A."/>
            <person name="Seno S."/>
            <person name="Sessa L."/>
            <person name="Sheng Y."/>
            <person name="Shibata Y."/>
            <person name="Shimada H."/>
            <person name="Shimada K."/>
            <person name="Silva D."/>
            <person name="Sinclair B."/>
            <person name="Sperling S."/>
            <person name="Stupka E."/>
            <person name="Sugiura K."/>
            <person name="Sultana R."/>
            <person name="Takenaka Y."/>
            <person name="Taki K."/>
            <person name="Tammoja K."/>
            <person name="Tan S.L."/>
            <person name="Tang S."/>
            <person name="Taylor M.S."/>
            <person name="Tegner J."/>
            <person name="Teichmann S.A."/>
            <person name="Ueda H.R."/>
            <person name="van Nimwegen E."/>
            <person name="Verardo R."/>
            <person name="Wei C.L."/>
            <person name="Yagi K."/>
            <person name="Yamanishi H."/>
            <person name="Zabarovsky E."/>
            <person name="Zhu S."/>
            <person name="Zimmer A."/>
            <person name="Hide W."/>
            <person name="Bult C."/>
            <person name="Grimmond S.M."/>
            <person name="Teasdale R.D."/>
            <person name="Liu E.T."/>
            <person name="Brusic V."/>
            <person name="Quackenbush J."/>
            <person name="Wahlestedt C."/>
            <person name="Mattick J.S."/>
            <person name="Hume D.A."/>
            <person name="Kai C."/>
            <person name="Sasaki D."/>
            <person name="Tomaru Y."/>
            <person name="Fukuda S."/>
            <person name="Kanamori-Katayama M."/>
            <person name="Suzuki M."/>
            <person name="Aoki J."/>
            <person name="Arakawa T."/>
            <person name="Iida J."/>
            <person name="Imamura K."/>
            <person name="Itoh M."/>
            <person name="Kato T."/>
            <person name="Kawaji H."/>
            <person name="Kawagashira N."/>
            <person name="Kawashima T."/>
            <person name="Kojima M."/>
            <person name="Kondo S."/>
            <person name="Konno H."/>
            <person name="Nakano K."/>
            <person name="Ninomiya N."/>
            <person name="Nishio T."/>
            <person name="Okada M."/>
            <person name="Plessy C."/>
            <person name="Shibata K."/>
            <person name="Shiraki T."/>
            <person name="Suzuki S."/>
            <person name="Tagami M."/>
            <person name="Waki K."/>
            <person name="Watahiki A."/>
            <person name="Okamura-Oho Y."/>
            <person name="Suzuki H."/>
            <person name="Kawai J."/>
            <person name="Hayashizaki Y."/>
        </authorList>
    </citation>
    <scope>NUCLEOTIDE SEQUENCE [LARGE SCALE MRNA] OF 1527-2504</scope>
    <source>
        <strain>C57BL/6J</strain>
        <tissue>Thymus</tissue>
    </source>
</reference>
<reference key="6">
    <citation type="journal article" date="1989" name="Biochem. Biophys. Res. Commun.">
        <title>Structure of mouse fatty acid synthase mRNA. Identification of the two NADPH binding sites.</title>
        <authorList>
            <person name="Paulauskis J.D."/>
            <person name="Sul H.S."/>
        </authorList>
    </citation>
    <scope>NUCLEOTIDE SEQUENCE [MRNA] OF 1666-2504</scope>
    <source>
        <strain>CD-1</strain>
        <tissue>Liver</tissue>
    </source>
</reference>
<reference key="7">
    <citation type="journal article" date="2010" name="Cell">
        <title>A tissue-specific atlas of mouse protein phosphorylation and expression.</title>
        <authorList>
            <person name="Huttlin E.L."/>
            <person name="Jedrychowski M.P."/>
            <person name="Elias J.E."/>
            <person name="Goswami T."/>
            <person name="Rad R."/>
            <person name="Beausoleil S.A."/>
            <person name="Villen J."/>
            <person name="Haas W."/>
            <person name="Sowa M.E."/>
            <person name="Gygi S.P."/>
        </authorList>
    </citation>
    <scope>PHOSPHORYLATION [LARGE SCALE ANALYSIS] AT SER-725; SER-1577; SER-1587 AND SER-2190</scope>
    <scope>IDENTIFICATION BY MASS SPECTROMETRY [LARGE SCALE ANALYSIS]</scope>
    <source>
        <tissue>Brain</tissue>
        <tissue>Brown adipose tissue</tissue>
        <tissue>Heart</tissue>
        <tissue>Kidney</tissue>
        <tissue>Liver</tissue>
        <tissue>Lung</tissue>
        <tissue>Pancreas</tissue>
        <tissue>Spleen</tissue>
        <tissue>Testis</tissue>
    </source>
</reference>
<reference key="8">
    <citation type="journal article" date="2012" name="Hepatology">
        <title>Antagonism of peripheral hepatic cannabinoid receptor-1 improves liver lipid metabolism in mice: evidence from cultured explants.</title>
        <authorList>
            <person name="Jourdan T."/>
            <person name="Demizieux L."/>
            <person name="Gresti J."/>
            <person name="Djaouti L."/>
            <person name="Gaba L."/>
            <person name="Verges B."/>
            <person name="Degrace P."/>
        </authorList>
    </citation>
    <scope>INDUCTION BY ENDOCANNABINOID ANANDAMIDE</scope>
</reference>
<reference key="9">
    <citation type="journal article" date="2018" name="ACS Chem. Biol.">
        <title>Characterization of the Polyspecific Transferase of Murine Type I Fatty Acid Synthase (FAS) and Implications for Polyketide Synthase (PKS) Engineering.</title>
        <authorList>
            <person name="Rittner A."/>
            <person name="Paithankar K.S."/>
            <person name="Huu K.V."/>
            <person name="Grininger M."/>
        </authorList>
    </citation>
    <scope>FUNCTION</scope>
    <scope>CATALYTIC ACTIVITY</scope>
    <scope>BIOPHYSICOCHEMICAL PROPERTIES</scope>
    <scope>PATHWAY</scope>
</reference>
<reference key="10">
    <citation type="journal article" date="2013" name="Mol. Cell">
        <title>SIRT5-mediated lysine desuccinylation impacts diverse metabolic pathways.</title>
        <authorList>
            <person name="Park J."/>
            <person name="Chen Y."/>
            <person name="Tishkoff D.X."/>
            <person name="Peng C."/>
            <person name="Tan M."/>
            <person name="Dai L."/>
            <person name="Xie Z."/>
            <person name="Zhang Y."/>
            <person name="Zwaans B.M."/>
            <person name="Skinner M.E."/>
            <person name="Lombard D.B."/>
            <person name="Zhao Y."/>
        </authorList>
    </citation>
    <scope>ACETYLATION [LARGE SCALE ANALYSIS] AT LYS-59; LYS-790; LYS-993; LYS-1071; LYS-1276; LYS-1840 AND LYS-2384</scope>
    <scope>IDENTIFICATION BY MASS SPECTROMETRY [LARGE SCALE ANALYSIS]</scope>
    <source>
        <tissue>Embryonic fibroblast</tissue>
    </source>
</reference>
<reference evidence="16" key="11">
    <citation type="journal article" date="2020" name="Protein Sci.">
        <title>Type I fatty acid synthase trapped in the octanoyl-bound state.</title>
        <authorList>
            <person name="Rittner A."/>
            <person name="Paithankar K.S."/>
            <person name="Himmler A."/>
            <person name="Grininger M."/>
        </authorList>
    </citation>
    <scope>X-RAY CRYSTALLOGRAPHY (2.70 ANGSTROMS) OF 2-852 IN COMPLEX WITH OCTANOATE AND OCTANOYL-COA</scope>
    <scope>FUNCTION</scope>
    <scope>CATALYTIC ACTIVITY</scope>
</reference>
<protein>
    <recommendedName>
        <fullName>Fatty acid synthase</fullName>
        <ecNumber evidence="10">2.3.1.85</ecNumber>
    </recommendedName>
    <alternativeName>
        <fullName evidence="13">Type I Fatty Acid Synthase</fullName>
    </alternativeName>
    <domain>
        <recommendedName>
            <fullName>[Acyl-carrier-protein] S-acetyltransferase</fullName>
            <ecNumber evidence="10">2.3.1.38</ecNumber>
        </recommendedName>
    </domain>
    <domain>
        <recommendedName>
            <fullName>[Acyl-carrier-protein] S-malonyltransferase</fullName>
            <ecNumber evidence="10">2.3.1.39</ecNumber>
        </recommendedName>
    </domain>
    <domain>
        <recommendedName>
            <fullName>3-oxoacyl-[acyl-carrier-protein] synthase</fullName>
            <ecNumber evidence="11">2.3.1.41</ecNumber>
        </recommendedName>
    </domain>
    <domain>
        <recommendedName>
            <fullName>3-oxoacyl-[acyl-carrier-protein] reductase</fullName>
            <ecNumber evidence="3">1.1.1.100</ecNumber>
        </recommendedName>
    </domain>
    <domain>
        <recommendedName>
            <fullName>3-hydroxyacyl-[acyl-carrier-protein] dehydratase</fullName>
            <ecNumber evidence="3">4.2.1.59</ecNumber>
        </recommendedName>
    </domain>
    <domain>
        <recommendedName>
            <fullName>Enoyl-[acyl-carrier-protein] reductase</fullName>
            <ecNumber evidence="3">1.3.1.39</ecNumber>
        </recommendedName>
    </domain>
    <domain>
        <recommendedName>
            <fullName>Acyl-[acyl-carrier-protein] hydrolase</fullName>
            <ecNumber evidence="3">3.1.2.14</ecNumber>
        </recommendedName>
    </domain>
</protein>
<keyword id="KW-0002">3D-structure</keyword>
<keyword id="KW-0007">Acetylation</keyword>
<keyword id="KW-0963">Cytoplasm</keyword>
<keyword id="KW-0903">Direct protein sequencing</keyword>
<keyword id="KW-0275">Fatty acid biosynthesis</keyword>
<keyword id="KW-0276">Fatty acid metabolism</keyword>
<keyword id="KW-0378">Hydrolase</keyword>
<keyword id="KW-1017">Isopeptide bond</keyword>
<keyword id="KW-0444">Lipid biosynthesis</keyword>
<keyword id="KW-0443">Lipid metabolism</keyword>
<keyword id="KW-0456">Lyase</keyword>
<keyword id="KW-0511">Multifunctional enzyme</keyword>
<keyword id="KW-0520">NAD</keyword>
<keyword id="KW-0521">NADP</keyword>
<keyword id="KW-0560">Oxidoreductase</keyword>
<keyword id="KW-0596">Phosphopantetheine</keyword>
<keyword id="KW-0597">Phosphoprotein</keyword>
<keyword id="KW-0663">Pyridoxal phosphate</keyword>
<keyword id="KW-1185">Reference proteome</keyword>
<keyword id="KW-0702">S-nitrosylation</keyword>
<keyword id="KW-0808">Transferase</keyword>
<keyword id="KW-0832">Ubl conjugation</keyword>
<accession>P19096</accession>
<accession>B1ATU8</accession>
<accession>Q6PB72</accession>
<accession>Q8C4Z0</accession>
<accession>Q9EQR0</accession>
<dbReference type="EC" id="2.3.1.85" evidence="10"/>
<dbReference type="EC" id="2.3.1.38" evidence="10"/>
<dbReference type="EC" id="2.3.1.39" evidence="10"/>
<dbReference type="EC" id="2.3.1.41" evidence="11"/>
<dbReference type="EC" id="1.1.1.100" evidence="3"/>
<dbReference type="EC" id="4.2.1.59" evidence="3"/>
<dbReference type="EC" id="1.3.1.39" evidence="3"/>
<dbReference type="EC" id="3.1.2.14" evidence="3"/>
<dbReference type="EMBL" id="AF127033">
    <property type="protein sequence ID" value="AAG02285.1"/>
    <property type="molecule type" value="mRNA"/>
</dbReference>
<dbReference type="EMBL" id="AL663090">
    <property type="status" value="NOT_ANNOTATED_CDS"/>
    <property type="molecule type" value="Genomic_DNA"/>
</dbReference>
<dbReference type="EMBL" id="BC046513">
    <property type="protein sequence ID" value="AAH46513.1"/>
    <property type="molecule type" value="mRNA"/>
</dbReference>
<dbReference type="EMBL" id="BC059850">
    <property type="protein sequence ID" value="AAH59850.1"/>
    <property type="molecule type" value="mRNA"/>
</dbReference>
<dbReference type="EMBL" id="AK080374">
    <property type="protein sequence ID" value="BAC37895.1"/>
    <property type="molecule type" value="mRNA"/>
</dbReference>
<dbReference type="EMBL" id="X13135">
    <property type="protein sequence ID" value="CAA31525.1"/>
    <property type="status" value="ALT_FRAME"/>
    <property type="molecule type" value="mRNA"/>
</dbReference>
<dbReference type="CCDS" id="CCDS25759.1"/>
<dbReference type="PIR" id="A32262">
    <property type="entry name" value="A32262"/>
</dbReference>
<dbReference type="RefSeq" id="NP_032014.3">
    <property type="nucleotide sequence ID" value="NM_007988.3"/>
</dbReference>
<dbReference type="RefSeq" id="XP_030101416.1">
    <property type="nucleotide sequence ID" value="XM_030245556.1"/>
</dbReference>
<dbReference type="PDB" id="5MY0">
    <property type="method" value="X-ray"/>
    <property type="resolution" value="2.94 A"/>
    <property type="chains" value="A/B/C/D=2-852"/>
</dbReference>
<dbReference type="PDB" id="5MY2">
    <property type="method" value="X-ray"/>
    <property type="resolution" value="2.70 A"/>
    <property type="chains" value="A/B/C/D=2-852"/>
</dbReference>
<dbReference type="PDB" id="6ROP">
    <property type="method" value="X-ray"/>
    <property type="resolution" value="2.70 A"/>
    <property type="chains" value="A/B/C/D=2-852"/>
</dbReference>
<dbReference type="PDBsum" id="5MY0"/>
<dbReference type="PDBsum" id="5MY2"/>
<dbReference type="PDBsum" id="6ROP"/>
<dbReference type="SMR" id="P19096"/>
<dbReference type="BioGRID" id="199596">
    <property type="interactions" value="30"/>
</dbReference>
<dbReference type="FunCoup" id="P19096">
    <property type="interactions" value="1252"/>
</dbReference>
<dbReference type="IntAct" id="P19096">
    <property type="interactions" value="6"/>
</dbReference>
<dbReference type="MINT" id="P19096"/>
<dbReference type="STRING" id="10090.ENSMUSP00000052872"/>
<dbReference type="BindingDB" id="P19096"/>
<dbReference type="ChEMBL" id="CHEMBL1795189"/>
<dbReference type="ESTHER" id="mouse-FASN">
    <property type="family name" value="Thioesterase"/>
</dbReference>
<dbReference type="GlyGen" id="P19096">
    <property type="glycosylation" value="5 sites, 2 N-linked glycans (2 sites), 1 O-linked glycan (1 site)"/>
</dbReference>
<dbReference type="iPTMnet" id="P19096"/>
<dbReference type="MetOSite" id="P19096"/>
<dbReference type="PhosphoSitePlus" id="P19096"/>
<dbReference type="SwissPalm" id="P19096"/>
<dbReference type="CPTAC" id="non-CPTAC-3808"/>
<dbReference type="jPOST" id="P19096"/>
<dbReference type="PaxDb" id="10090-ENSMUSP00000052872"/>
<dbReference type="PeptideAtlas" id="P19096"/>
<dbReference type="ProteomicsDB" id="275589"/>
<dbReference type="Pumba" id="P19096"/>
<dbReference type="Antibodypedia" id="1650">
    <property type="antibodies" value="768 antibodies from 41 providers"/>
</dbReference>
<dbReference type="DNASU" id="14104"/>
<dbReference type="Ensembl" id="ENSMUST00000055655.9">
    <property type="protein sequence ID" value="ENSMUSP00000052872.8"/>
    <property type="gene ID" value="ENSMUSG00000025153.10"/>
</dbReference>
<dbReference type="GeneID" id="14104"/>
<dbReference type="KEGG" id="mmu:14104"/>
<dbReference type="UCSC" id="uc007mut.1">
    <property type="organism name" value="mouse"/>
</dbReference>
<dbReference type="AGR" id="MGI:95485"/>
<dbReference type="CTD" id="2194"/>
<dbReference type="MGI" id="MGI:95485">
    <property type="gene designation" value="Fasn"/>
</dbReference>
<dbReference type="VEuPathDB" id="HostDB:ENSMUSG00000025153"/>
<dbReference type="eggNOG" id="KOG1202">
    <property type="taxonomic scope" value="Eukaryota"/>
</dbReference>
<dbReference type="GeneTree" id="ENSGT00940000157276"/>
<dbReference type="HOGENOM" id="CLU_000022_31_7_1"/>
<dbReference type="InParanoid" id="P19096"/>
<dbReference type="OMA" id="KMRGGEF"/>
<dbReference type="OrthoDB" id="329835at2759"/>
<dbReference type="PhylomeDB" id="P19096"/>
<dbReference type="TreeFam" id="TF300549"/>
<dbReference type="BRENDA" id="2.3.1.85">
    <property type="organism ID" value="3474"/>
</dbReference>
<dbReference type="Reactome" id="R-MMU-199220">
    <property type="pathway name" value="Vitamin B5 (pantothenate) metabolism"/>
</dbReference>
<dbReference type="Reactome" id="R-MMU-75105">
    <property type="pathway name" value="Fatty acyl-CoA biosynthesis"/>
</dbReference>
<dbReference type="UniPathway" id="UPA00094"/>
<dbReference type="BioGRID-ORCS" id="14104">
    <property type="hits" value="23 hits in 80 CRISPR screens"/>
</dbReference>
<dbReference type="ChiTaRS" id="Fasn">
    <property type="organism name" value="mouse"/>
</dbReference>
<dbReference type="PRO" id="PR:P19096"/>
<dbReference type="Proteomes" id="UP000000589">
    <property type="component" value="Chromosome 11"/>
</dbReference>
<dbReference type="RNAct" id="P19096">
    <property type="molecule type" value="protein"/>
</dbReference>
<dbReference type="Bgee" id="ENSMUSG00000025153">
    <property type="expression patterns" value="Expressed in aorta tunica adventitia and 296 other cell types or tissues"/>
</dbReference>
<dbReference type="ExpressionAtlas" id="P19096">
    <property type="expression patterns" value="baseline and differential"/>
</dbReference>
<dbReference type="GO" id="GO:0005829">
    <property type="term" value="C:cytosol"/>
    <property type="evidence" value="ECO:0000266"/>
    <property type="project" value="MGI"/>
</dbReference>
<dbReference type="GO" id="GO:0042587">
    <property type="term" value="C:glycogen granule"/>
    <property type="evidence" value="ECO:0000314"/>
    <property type="project" value="MGI"/>
</dbReference>
<dbReference type="GO" id="GO:0005794">
    <property type="term" value="C:Golgi apparatus"/>
    <property type="evidence" value="ECO:0007669"/>
    <property type="project" value="Ensembl"/>
</dbReference>
<dbReference type="GO" id="GO:0042470">
    <property type="term" value="C:melanosome"/>
    <property type="evidence" value="ECO:0007669"/>
    <property type="project" value="UniProtKB-SubCell"/>
</dbReference>
<dbReference type="GO" id="GO:0005739">
    <property type="term" value="C:mitochondrion"/>
    <property type="evidence" value="ECO:0007005"/>
    <property type="project" value="MGI"/>
</dbReference>
<dbReference type="GO" id="GO:0005886">
    <property type="term" value="C:plasma membrane"/>
    <property type="evidence" value="ECO:0007669"/>
    <property type="project" value="Ensembl"/>
</dbReference>
<dbReference type="GO" id="GO:0019171">
    <property type="term" value="F:(3R)-hydroxyacyl-[acyl-carrier-protein] dehydratase activity"/>
    <property type="evidence" value="ECO:0007669"/>
    <property type="project" value="UniProtKB-EC"/>
</dbReference>
<dbReference type="GO" id="GO:0004316">
    <property type="term" value="F:3-oxoacyl-[acyl-carrier-protein] reductase (NADPH) activity"/>
    <property type="evidence" value="ECO:0007669"/>
    <property type="project" value="UniProtKB-EC"/>
</dbReference>
<dbReference type="GO" id="GO:0004315">
    <property type="term" value="F:3-oxoacyl-[acyl-carrier-protein] synthase activity"/>
    <property type="evidence" value="ECO:0007669"/>
    <property type="project" value="UniProtKB-EC"/>
</dbReference>
<dbReference type="GO" id="GO:0004313">
    <property type="term" value="F:[acyl-carrier-protein] S-acetyltransferase activity"/>
    <property type="evidence" value="ECO:0007669"/>
    <property type="project" value="UniProtKB-EC"/>
</dbReference>
<dbReference type="GO" id="GO:0004314">
    <property type="term" value="F:[acyl-carrier-protein] S-malonyltransferase activity"/>
    <property type="evidence" value="ECO:0007669"/>
    <property type="project" value="UniProtKB-EC"/>
</dbReference>
<dbReference type="GO" id="GO:0141148">
    <property type="term" value="F:enoyl-[acyl-carrier-protein] reductase (NADPH) activity"/>
    <property type="evidence" value="ECO:0007669"/>
    <property type="project" value="UniProtKB-EC"/>
</dbReference>
<dbReference type="GO" id="GO:0004312">
    <property type="term" value="F:fatty acid synthase activity"/>
    <property type="evidence" value="ECO:0000314"/>
    <property type="project" value="MGI"/>
</dbReference>
<dbReference type="GO" id="GO:0016297">
    <property type="term" value="F:fatty acyl-[ACP] hydrolase activity"/>
    <property type="evidence" value="ECO:0007669"/>
    <property type="project" value="UniProtKB-EC"/>
</dbReference>
<dbReference type="GO" id="GO:0042802">
    <property type="term" value="F:identical protein binding"/>
    <property type="evidence" value="ECO:0007669"/>
    <property type="project" value="Ensembl"/>
</dbReference>
<dbReference type="GO" id="GO:0031177">
    <property type="term" value="F:phosphopantetheine binding"/>
    <property type="evidence" value="ECO:0007669"/>
    <property type="project" value="InterPro"/>
</dbReference>
<dbReference type="GO" id="GO:0006084">
    <property type="term" value="P:acetyl-CoA metabolic process"/>
    <property type="evidence" value="ECO:0007669"/>
    <property type="project" value="Ensembl"/>
</dbReference>
<dbReference type="GO" id="GO:0071353">
    <property type="term" value="P:cellular response to interleukin-4"/>
    <property type="evidence" value="ECO:0000314"/>
    <property type="project" value="MGI"/>
</dbReference>
<dbReference type="GO" id="GO:0002064">
    <property type="term" value="P:epithelial cell development"/>
    <property type="evidence" value="ECO:0000315"/>
    <property type="project" value="MGI"/>
</dbReference>
<dbReference type="GO" id="GO:0090557">
    <property type="term" value="P:establishment of endothelial intestinal barrier"/>
    <property type="evidence" value="ECO:0000315"/>
    <property type="project" value="MGI"/>
</dbReference>
<dbReference type="GO" id="GO:0008611">
    <property type="term" value="P:ether lipid biosynthetic process"/>
    <property type="evidence" value="ECO:0000315"/>
    <property type="project" value="MGI"/>
</dbReference>
<dbReference type="GO" id="GO:0006633">
    <property type="term" value="P:fatty acid biosynthetic process"/>
    <property type="evidence" value="ECO:0000314"/>
    <property type="project" value="MGI"/>
</dbReference>
<dbReference type="GO" id="GO:0006954">
    <property type="term" value="P:inflammatory response"/>
    <property type="evidence" value="ECO:0000315"/>
    <property type="project" value="MGI"/>
</dbReference>
<dbReference type="GO" id="GO:0008610">
    <property type="term" value="P:lipid biosynthetic process"/>
    <property type="evidence" value="ECO:0000314"/>
    <property type="project" value="MGI"/>
</dbReference>
<dbReference type="GO" id="GO:0030879">
    <property type="term" value="P:mammary gland development"/>
    <property type="evidence" value="ECO:0000315"/>
    <property type="project" value="CACAO"/>
</dbReference>
<dbReference type="GO" id="GO:0044788">
    <property type="term" value="P:modulation by host of viral process"/>
    <property type="evidence" value="ECO:0007669"/>
    <property type="project" value="Ensembl"/>
</dbReference>
<dbReference type="GO" id="GO:0030224">
    <property type="term" value="P:monocyte differentiation"/>
    <property type="evidence" value="ECO:0000315"/>
    <property type="project" value="MGI"/>
</dbReference>
<dbReference type="GO" id="GO:0030223">
    <property type="term" value="P:neutrophil differentiation"/>
    <property type="evidence" value="ECO:0000315"/>
    <property type="project" value="MGI"/>
</dbReference>
<dbReference type="GO" id="GO:0061771">
    <property type="term" value="P:response to caloric restriction"/>
    <property type="evidence" value="ECO:0000314"/>
    <property type="project" value="MGI"/>
</dbReference>
<dbReference type="GO" id="GO:0007584">
    <property type="term" value="P:response to nutrient"/>
    <property type="evidence" value="ECO:0007669"/>
    <property type="project" value="Ensembl"/>
</dbReference>
<dbReference type="GO" id="GO:0009888">
    <property type="term" value="P:tissue development"/>
    <property type="evidence" value="ECO:0000315"/>
    <property type="project" value="MGI"/>
</dbReference>
<dbReference type="CDD" id="cd05195">
    <property type="entry name" value="enoyl_red"/>
    <property type="match status" value="1"/>
</dbReference>
<dbReference type="CDD" id="cd08954">
    <property type="entry name" value="KR_1_FAS_SDR_x"/>
    <property type="match status" value="2"/>
</dbReference>
<dbReference type="CDD" id="cd00833">
    <property type="entry name" value="PKS"/>
    <property type="match status" value="1"/>
</dbReference>
<dbReference type="FunFam" id="1.10.1200.10:FF:000013">
    <property type="entry name" value="Fatty acid synthase"/>
    <property type="match status" value="1"/>
</dbReference>
<dbReference type="FunFam" id="3.10.129.110:FF:000002">
    <property type="entry name" value="Fatty acid synthase"/>
    <property type="match status" value="1"/>
</dbReference>
<dbReference type="FunFam" id="3.40.366.10:FF:000005">
    <property type="entry name" value="Fatty acid synthase"/>
    <property type="match status" value="1"/>
</dbReference>
<dbReference type="FunFam" id="3.40.47.10:FF:000033">
    <property type="entry name" value="Fatty acid synthase"/>
    <property type="match status" value="1"/>
</dbReference>
<dbReference type="FunFam" id="3.40.50.150:FF:000186">
    <property type="entry name" value="Fatty acid synthase"/>
    <property type="match status" value="1"/>
</dbReference>
<dbReference type="FunFam" id="3.40.50.1820:FF:000059">
    <property type="entry name" value="Fatty acid synthase"/>
    <property type="match status" value="1"/>
</dbReference>
<dbReference type="FunFam" id="3.40.50.1820:FF:000105">
    <property type="entry name" value="Fatty acid synthase"/>
    <property type="match status" value="1"/>
</dbReference>
<dbReference type="FunFam" id="3.40.50.720:FF:000249">
    <property type="entry name" value="Fatty acid synthase"/>
    <property type="match status" value="1"/>
</dbReference>
<dbReference type="FunFam" id="3.90.180.10:FF:000015">
    <property type="entry name" value="Fatty acid synthase"/>
    <property type="match status" value="1"/>
</dbReference>
<dbReference type="FunFam" id="3.40.50.720:FF:000209">
    <property type="entry name" value="Polyketide synthase Pks12"/>
    <property type="match status" value="1"/>
</dbReference>
<dbReference type="Gene3D" id="3.30.70.3290">
    <property type="match status" value="1"/>
</dbReference>
<dbReference type="Gene3D" id="3.40.47.10">
    <property type="match status" value="1"/>
</dbReference>
<dbReference type="Gene3D" id="1.10.1200.10">
    <property type="entry name" value="ACP-like"/>
    <property type="match status" value="1"/>
</dbReference>
<dbReference type="Gene3D" id="3.40.50.1820">
    <property type="entry name" value="alpha/beta hydrolase"/>
    <property type="match status" value="2"/>
</dbReference>
<dbReference type="Gene3D" id="3.40.366.10">
    <property type="entry name" value="Malonyl-Coenzyme A Acyl Carrier Protein, domain 2"/>
    <property type="match status" value="1"/>
</dbReference>
<dbReference type="Gene3D" id="3.90.180.10">
    <property type="entry name" value="Medium-chain alcohol dehydrogenases, catalytic domain"/>
    <property type="match status" value="1"/>
</dbReference>
<dbReference type="Gene3D" id="3.40.50.720">
    <property type="entry name" value="NAD(P)-binding Rossmann-like Domain"/>
    <property type="match status" value="1"/>
</dbReference>
<dbReference type="Gene3D" id="3.10.129.110">
    <property type="entry name" value="Polyketide synthase dehydratase"/>
    <property type="match status" value="1"/>
</dbReference>
<dbReference type="Gene3D" id="3.40.50.150">
    <property type="entry name" value="Vaccinia Virus protein VP39"/>
    <property type="match status" value="1"/>
</dbReference>
<dbReference type="InterPro" id="IPR029058">
    <property type="entry name" value="AB_hydrolase_fold"/>
</dbReference>
<dbReference type="InterPro" id="IPR001227">
    <property type="entry name" value="Ac_transferase_dom_sf"/>
</dbReference>
<dbReference type="InterPro" id="IPR036736">
    <property type="entry name" value="ACP-like_sf"/>
</dbReference>
<dbReference type="InterPro" id="IPR014043">
    <property type="entry name" value="Acyl_transferase_dom"/>
</dbReference>
<dbReference type="InterPro" id="IPR016035">
    <property type="entry name" value="Acyl_Trfase/lysoPLipase"/>
</dbReference>
<dbReference type="InterPro" id="IPR049391">
    <property type="entry name" value="FAS_pseudo-KR"/>
</dbReference>
<dbReference type="InterPro" id="IPR011032">
    <property type="entry name" value="GroES-like_sf"/>
</dbReference>
<dbReference type="InterPro" id="IPR018201">
    <property type="entry name" value="Ketoacyl_synth_AS"/>
</dbReference>
<dbReference type="InterPro" id="IPR014031">
    <property type="entry name" value="Ketoacyl_synth_C"/>
</dbReference>
<dbReference type="InterPro" id="IPR014030">
    <property type="entry name" value="Ketoacyl_synth_N"/>
</dbReference>
<dbReference type="InterPro" id="IPR016036">
    <property type="entry name" value="Malonyl_transacylase_ACP-bd"/>
</dbReference>
<dbReference type="InterPro" id="IPR013217">
    <property type="entry name" value="Methyltransf_12"/>
</dbReference>
<dbReference type="InterPro" id="IPR036291">
    <property type="entry name" value="NAD(P)-bd_dom_sf"/>
</dbReference>
<dbReference type="InterPro" id="IPR032821">
    <property type="entry name" value="PKS_assoc"/>
</dbReference>
<dbReference type="InterPro" id="IPR020841">
    <property type="entry name" value="PKS_Beta-ketoAc_synthase_dom"/>
</dbReference>
<dbReference type="InterPro" id="IPR042104">
    <property type="entry name" value="PKS_dehydratase_sf"/>
</dbReference>
<dbReference type="InterPro" id="IPR020807">
    <property type="entry name" value="PKS_DH"/>
</dbReference>
<dbReference type="InterPro" id="IPR049552">
    <property type="entry name" value="PKS_DH_N"/>
</dbReference>
<dbReference type="InterPro" id="IPR020843">
    <property type="entry name" value="PKS_ER"/>
</dbReference>
<dbReference type="InterPro" id="IPR013968">
    <property type="entry name" value="PKS_KR"/>
</dbReference>
<dbReference type="InterPro" id="IPR049900">
    <property type="entry name" value="PKS_mFAS_DH"/>
</dbReference>
<dbReference type="InterPro" id="IPR050091">
    <property type="entry name" value="PKS_NRPS_Biosynth_Enz"/>
</dbReference>
<dbReference type="InterPro" id="IPR020806">
    <property type="entry name" value="PKS_PP-bd"/>
</dbReference>
<dbReference type="InterPro" id="IPR009081">
    <property type="entry name" value="PP-bd_ACP"/>
</dbReference>
<dbReference type="InterPro" id="IPR006162">
    <property type="entry name" value="Ppantetheine_attach_site"/>
</dbReference>
<dbReference type="InterPro" id="IPR029063">
    <property type="entry name" value="SAM-dependent_MTases_sf"/>
</dbReference>
<dbReference type="InterPro" id="IPR001031">
    <property type="entry name" value="Thioesterase"/>
</dbReference>
<dbReference type="InterPro" id="IPR016039">
    <property type="entry name" value="Thiolase-like"/>
</dbReference>
<dbReference type="PANTHER" id="PTHR43775">
    <property type="entry name" value="FATTY ACID SYNTHASE"/>
    <property type="match status" value="1"/>
</dbReference>
<dbReference type="PANTHER" id="PTHR43775:SF7">
    <property type="entry name" value="FATTY ACID SYNTHASE"/>
    <property type="match status" value="1"/>
</dbReference>
<dbReference type="Pfam" id="PF00698">
    <property type="entry name" value="Acyl_transf_1"/>
    <property type="match status" value="1"/>
</dbReference>
<dbReference type="Pfam" id="PF13602">
    <property type="entry name" value="ADH_zinc_N_2"/>
    <property type="match status" value="1"/>
</dbReference>
<dbReference type="Pfam" id="PF21149">
    <property type="entry name" value="FAS_pseudo-KR"/>
    <property type="match status" value="1"/>
</dbReference>
<dbReference type="Pfam" id="PF16197">
    <property type="entry name" value="KAsynt_C_assoc"/>
    <property type="match status" value="1"/>
</dbReference>
<dbReference type="Pfam" id="PF00109">
    <property type="entry name" value="ketoacyl-synt"/>
    <property type="match status" value="1"/>
</dbReference>
<dbReference type="Pfam" id="PF02801">
    <property type="entry name" value="Ketoacyl-synt_C"/>
    <property type="match status" value="1"/>
</dbReference>
<dbReference type="Pfam" id="PF08659">
    <property type="entry name" value="KR"/>
    <property type="match status" value="1"/>
</dbReference>
<dbReference type="Pfam" id="PF08242">
    <property type="entry name" value="Methyltransf_12"/>
    <property type="match status" value="1"/>
</dbReference>
<dbReference type="Pfam" id="PF21089">
    <property type="entry name" value="PKS_DH_N"/>
    <property type="match status" value="1"/>
</dbReference>
<dbReference type="Pfam" id="PF00550">
    <property type="entry name" value="PP-binding"/>
    <property type="match status" value="1"/>
</dbReference>
<dbReference type="Pfam" id="PF00975">
    <property type="entry name" value="Thioesterase"/>
    <property type="match status" value="1"/>
</dbReference>
<dbReference type="SMART" id="SM00827">
    <property type="entry name" value="PKS_AT"/>
    <property type="match status" value="1"/>
</dbReference>
<dbReference type="SMART" id="SM00826">
    <property type="entry name" value="PKS_DH"/>
    <property type="match status" value="1"/>
</dbReference>
<dbReference type="SMART" id="SM00829">
    <property type="entry name" value="PKS_ER"/>
    <property type="match status" value="1"/>
</dbReference>
<dbReference type="SMART" id="SM00822">
    <property type="entry name" value="PKS_KR"/>
    <property type="match status" value="1"/>
</dbReference>
<dbReference type="SMART" id="SM00825">
    <property type="entry name" value="PKS_KS"/>
    <property type="match status" value="1"/>
</dbReference>
<dbReference type="SMART" id="SM00823">
    <property type="entry name" value="PKS_PP"/>
    <property type="match status" value="1"/>
</dbReference>
<dbReference type="SUPFAM" id="SSF47336">
    <property type="entry name" value="ACP-like"/>
    <property type="match status" value="1"/>
</dbReference>
<dbReference type="SUPFAM" id="SSF53474">
    <property type="entry name" value="alpha/beta-Hydrolases"/>
    <property type="match status" value="1"/>
</dbReference>
<dbReference type="SUPFAM" id="SSF52151">
    <property type="entry name" value="FabD/lysophospholipase-like"/>
    <property type="match status" value="1"/>
</dbReference>
<dbReference type="SUPFAM" id="SSF50129">
    <property type="entry name" value="GroES-like"/>
    <property type="match status" value="1"/>
</dbReference>
<dbReference type="SUPFAM" id="SSF51735">
    <property type="entry name" value="NAD(P)-binding Rossmann-fold domains"/>
    <property type="match status" value="2"/>
</dbReference>
<dbReference type="SUPFAM" id="SSF55048">
    <property type="entry name" value="Probable ACP-binding domain of malonyl-CoA ACP transacylase"/>
    <property type="match status" value="1"/>
</dbReference>
<dbReference type="SUPFAM" id="SSF53335">
    <property type="entry name" value="S-adenosyl-L-methionine-dependent methyltransferases"/>
    <property type="match status" value="1"/>
</dbReference>
<dbReference type="SUPFAM" id="SSF53901">
    <property type="entry name" value="Thiolase-like"/>
    <property type="match status" value="1"/>
</dbReference>
<dbReference type="PROSITE" id="PS50075">
    <property type="entry name" value="CARRIER"/>
    <property type="match status" value="1"/>
</dbReference>
<dbReference type="PROSITE" id="PS00606">
    <property type="entry name" value="KS3_1"/>
    <property type="match status" value="1"/>
</dbReference>
<dbReference type="PROSITE" id="PS52004">
    <property type="entry name" value="KS3_2"/>
    <property type="match status" value="1"/>
</dbReference>
<dbReference type="PROSITE" id="PS00012">
    <property type="entry name" value="PHOSPHOPANTETHEINE"/>
    <property type="match status" value="1"/>
</dbReference>
<dbReference type="PROSITE" id="PS52019">
    <property type="entry name" value="PKS_MFAS_DH"/>
    <property type="match status" value="1"/>
</dbReference>
<organism>
    <name type="scientific">Mus musculus</name>
    <name type="common">Mouse</name>
    <dbReference type="NCBI Taxonomy" id="10090"/>
    <lineage>
        <taxon>Eukaryota</taxon>
        <taxon>Metazoa</taxon>
        <taxon>Chordata</taxon>
        <taxon>Craniata</taxon>
        <taxon>Vertebrata</taxon>
        <taxon>Euteleostomi</taxon>
        <taxon>Mammalia</taxon>
        <taxon>Eutheria</taxon>
        <taxon>Euarchontoglires</taxon>
        <taxon>Glires</taxon>
        <taxon>Rodentia</taxon>
        <taxon>Myomorpha</taxon>
        <taxon>Muroidea</taxon>
        <taxon>Muridae</taxon>
        <taxon>Murinae</taxon>
        <taxon>Mus</taxon>
        <taxon>Mus</taxon>
    </lineage>
</organism>